<proteinExistence type="evidence at protein level"/>
<evidence type="ECO:0000255" key="1">
    <source>
        <dbReference type="PROSITE-ProRule" id="PRU00809"/>
    </source>
</evidence>
<evidence type="ECO:0000269" key="2">
    <source>
    </source>
</evidence>
<evidence type="ECO:0000269" key="3">
    <source>
    </source>
</evidence>
<evidence type="ECO:0000269" key="4">
    <source>
    </source>
</evidence>
<evidence type="ECO:0000269" key="5">
    <source>
    </source>
</evidence>
<evidence type="ECO:0000269" key="6">
    <source>
    </source>
</evidence>
<evidence type="ECO:0000269" key="7">
    <source>
    </source>
</evidence>
<evidence type="ECO:0000269" key="8">
    <source>
    </source>
</evidence>
<evidence type="ECO:0000269" key="9">
    <source>
    </source>
</evidence>
<evidence type="ECO:0000269" key="10">
    <source>
    </source>
</evidence>
<evidence type="ECO:0000269" key="11">
    <source>
    </source>
</evidence>
<evidence type="ECO:0000269" key="12">
    <source>
    </source>
</evidence>
<evidence type="ECO:0000269" key="13">
    <source>
    </source>
</evidence>
<evidence type="ECO:0000269" key="14">
    <source>
    </source>
</evidence>
<evidence type="ECO:0000269" key="15">
    <source>
    </source>
</evidence>
<evidence type="ECO:0000269" key="16">
    <source>
    </source>
</evidence>
<evidence type="ECO:0000269" key="17">
    <source>
    </source>
</evidence>
<evidence type="ECO:0000269" key="18">
    <source>
    </source>
</evidence>
<evidence type="ECO:0000269" key="19">
    <source>
    </source>
</evidence>
<evidence type="ECO:0000269" key="20">
    <source>
    </source>
</evidence>
<evidence type="ECO:0000269" key="21">
    <source>
    </source>
</evidence>
<evidence type="ECO:0000269" key="22">
    <source>
    </source>
</evidence>
<evidence type="ECO:0000269" key="23">
    <source>
    </source>
</evidence>
<evidence type="ECO:0000269" key="24">
    <source ref="4"/>
</evidence>
<evidence type="ECO:0000269" key="25">
    <source ref="6"/>
</evidence>
<evidence type="ECO:0000269" key="26">
    <source ref="9"/>
</evidence>
<evidence type="ECO:0000303" key="27">
    <source>
    </source>
</evidence>
<evidence type="ECO:0000305" key="28"/>
<evidence type="ECO:0000305" key="29">
    <source>
    </source>
</evidence>
<evidence type="ECO:0000312" key="30">
    <source>
        <dbReference type="HGNC" id="HGNC:9541"/>
    </source>
</evidence>
<evidence type="ECO:0007744" key="31">
    <source>
    </source>
</evidence>
<evidence type="ECO:0007744" key="32">
    <source>
    </source>
</evidence>
<evidence type="ECO:0007744" key="33">
    <source>
    </source>
</evidence>
<evidence type="ECO:0007744" key="34">
    <source>
    </source>
</evidence>
<evidence type="ECO:0007829" key="35">
    <source>
        <dbReference type="PDB" id="4R3O"/>
    </source>
</evidence>
<evidence type="ECO:0007829" key="36">
    <source>
        <dbReference type="PDB" id="5LE5"/>
    </source>
</evidence>
<evidence type="ECO:0007829" key="37">
    <source>
        <dbReference type="PDB" id="7NAN"/>
    </source>
</evidence>
<evidence type="ECO:0007829" key="38">
    <source>
        <dbReference type="PDB" id="8CVR"/>
    </source>
</evidence>
<feature type="propeptide" id="PRO_0000026579" evidence="10 26">
    <location>
        <begin position="1"/>
        <end position="45"/>
    </location>
</feature>
<feature type="chain" id="PRO_0000026580" description="Proteasome subunit beta type-4">
    <location>
        <begin position="46"/>
        <end position="264"/>
    </location>
</feature>
<feature type="modified residue" description="N-acetylmethionine" evidence="32 33">
    <location>
        <position position="1"/>
    </location>
</feature>
<feature type="modified residue" description="Phosphoserine" evidence="34">
    <location>
        <position position="26"/>
    </location>
</feature>
<feature type="modified residue" description="Phosphotyrosine" evidence="31">
    <location>
        <position position="102"/>
    </location>
</feature>
<feature type="sequence variant" id="VAR_012072" description="In dbSNP:rs1804241.">
    <original>M</original>
    <variation>I</variation>
    <location>
        <position position="95"/>
    </location>
</feature>
<feature type="sequence variant" id="VAR_075255" description="In PRAAS3; decreased protein maturation; changed proteasome assembly; poor incorporation into 20S and 26S proteasomes." evidence="13">
    <location>
        <begin position="212"/>
        <end position="214"/>
    </location>
</feature>
<feature type="sequence variant" id="VAR_081126" description="In PRAAS3; digenic inheritance; patient also carries a mutation in PSMB8; no effect on protein abundance; changed proteasome assembly; poor incorporation into 20S and 26S proteasomes." evidence="13">
    <location>
        <begin position="222"/>
        <end position="264"/>
    </location>
</feature>
<feature type="sequence variant" id="VAR_013115" description="In dbSNP:rs4603." evidence="6 19 20 24 25">
    <original>I</original>
    <variation>T</variation>
    <location>
        <position position="234"/>
    </location>
</feature>
<feature type="sequence conflict" description="In Ref. 3; CAG33101." evidence="28" ref="3">
    <original>E</original>
    <variation>D</variation>
    <location>
        <position position="264"/>
    </location>
</feature>
<feature type="strand" evidence="36">
    <location>
        <begin position="51"/>
        <end position="53"/>
    </location>
</feature>
<feature type="strand" evidence="36">
    <location>
        <begin position="56"/>
        <end position="61"/>
    </location>
</feature>
<feature type="strand" evidence="36">
    <location>
        <begin position="64"/>
        <end position="70"/>
    </location>
</feature>
<feature type="strand" evidence="36">
    <location>
        <begin position="73"/>
        <end position="75"/>
    </location>
</feature>
<feature type="strand" evidence="36">
    <location>
        <begin position="78"/>
        <end position="81"/>
    </location>
</feature>
<feature type="strand" evidence="36">
    <location>
        <begin position="87"/>
        <end position="91"/>
    </location>
</feature>
<feature type="strand" evidence="36">
    <location>
        <begin position="94"/>
        <end position="101"/>
    </location>
</feature>
<feature type="helix" evidence="36">
    <location>
        <begin position="102"/>
        <end position="122"/>
    </location>
</feature>
<feature type="helix" evidence="36">
    <location>
        <begin position="130"/>
        <end position="146"/>
    </location>
</feature>
<feature type="strand" evidence="36">
    <location>
        <begin position="153"/>
        <end position="161"/>
    </location>
</feature>
<feature type="strand" evidence="36">
    <location>
        <begin position="164"/>
        <end position="170"/>
    </location>
</feature>
<feature type="strand" evidence="35">
    <location>
        <begin position="172"/>
        <end position="174"/>
    </location>
</feature>
<feature type="strand" evidence="36">
    <location>
        <begin position="176"/>
        <end position="178"/>
    </location>
</feature>
<feature type="strand" evidence="36">
    <location>
        <begin position="180"/>
        <end position="183"/>
    </location>
</feature>
<feature type="helix" evidence="36">
    <location>
        <begin position="187"/>
        <end position="190"/>
    </location>
</feature>
<feature type="helix" evidence="36">
    <location>
        <begin position="192"/>
        <end position="201"/>
    </location>
</feature>
<feature type="strand" evidence="38">
    <location>
        <begin position="202"/>
        <end position="204"/>
    </location>
</feature>
<feature type="helix" evidence="36">
    <location>
        <begin position="207"/>
        <end position="224"/>
    </location>
</feature>
<feature type="strand" evidence="37">
    <location>
        <begin position="225"/>
        <end position="227"/>
    </location>
</feature>
<feature type="strand" evidence="36">
    <location>
        <begin position="232"/>
        <end position="238"/>
    </location>
</feature>
<feature type="strand" evidence="36">
    <location>
        <begin position="241"/>
        <end position="248"/>
    </location>
</feature>
<feature type="helix" evidence="36">
    <location>
        <begin position="255"/>
        <end position="258"/>
    </location>
</feature>
<gene>
    <name evidence="30" type="primary">PSMB4</name>
    <name type="synonym">PROS26</name>
</gene>
<sequence>MEAFLGSRSGLWAGGPAPGQFYRIPSTPDSFMDPASALYRGPITRTQNPMVTGTSVLGVKFEGGVVIAADMLGSYGSLARFRNISRIMRVNNSTMLGASGDYADFQYLKQVLGQMVIDEELLGDGHSYSPRAIHSWLTRAMYSRRSKMNPLWNTMVIGGYADGESFLGYVDMLGVAYEAPSLATGYGAYLAQPLLREVLEKQPVLSQTEARDLVERCMRVLYYRDARSYNRFQIATVTEKGVEIEGPLSTETNWDIAHMISGFE</sequence>
<accession>P28070</accession>
<accession>B2R9L3</accession>
<accession>P31148</accession>
<accession>Q5SZS5</accession>
<accession>Q6IBI4</accession>
<accession>Q969L6</accession>
<comment type="function">
    <text evidence="3 7 14 21">Non-catalytic component of the 20S core proteasome complex involved in the proteolytic degradation of most intracellular proteins. This complex plays numerous essential roles within the cell by associating with different regulatory particles. Associated with two 19S regulatory particles, forms the 26S proteasome and thus participates in the ATP-dependent degradation of ubiquitinated proteins. The 26S proteasome plays a key role in the maintenance of protein homeostasis by removing misfolded or damaged proteins that could impair cellular functions, and by removing proteins whose functions are no longer required. Associated with the PA200 or PA28, the 20S proteasome mediates ubiquitin-independent protein degradation. This type of proteolysis is required in several pathways including spermatogenesis (20S-PA200 complex) or generation of a subset of MHC class I-presented antigenic peptides (20S-PA28 complex). SMAD1/OAZ1/PSMB4 complex mediates the degradation of the CREBBP/EP300 repressor SNIP1.</text>
</comment>
<comment type="subunit">
    <text evidence="2 3 8 11 12 15 16 17 18 23">The 26S proteasome consists of a 20S proteasome core and two 19S regulatory subunits (PubMed:25599644, PubMed:26133119, PubMed:27342858, PubMed:27428775, PubMed:27493187, PubMed:34711951, PubMed:9344905). The 20S proteasome core is a barrel-shaped complex made of 28 subunits that are arranged in four stacked rings (PubMed:25599644, PubMed:26133119, PubMed:27342858, PubMed:27428775, PubMed:27493187, PubMed:34711951, PubMed:9344905). The two outer rings are each formed by seven alpha subunits, and the two inner rings are formed by seven beta subunits (PubMed:25599644, PubMed:26133119, PubMed:27342858, PubMed:27428775, PubMed:27493187, PubMed:34711951, PubMed:9344905). The proteolytic activity is exerted by three beta-subunits PSMB5, PSMB6 and PSMB7 (PubMed:25599644, PubMed:26133119, PubMed:27342858, PubMed:27428775, PubMed:27493187, PubMed:34711951, PubMed:9344905). Forms a ternary complex with SMAD1 and OAZ1 before PSMB4 is incorporated into the 20S proteasome (PubMed:11571290, PubMed:12097147). Interacts with PRPF19 (PubMed:15660529).</text>
</comment>
<comment type="subunit">
    <text evidence="22">(Microbial infection) Interacts with HTLV-1 Tax protein.</text>
</comment>
<comment type="subunit">
    <text evidence="5 23">(Microbial infection) Interacts with HIV-1 Nef and Tat proteins.</text>
</comment>
<comment type="interaction">
    <interactant intactId="EBI-603350">
        <id>P28070</id>
    </interactant>
    <interactant intactId="EBI-8643161">
        <id>Q9NX04</id>
        <label>AIRIM</label>
    </interactant>
    <organismsDiffer>false</organismsDiffer>
    <experiments>3</experiments>
</comment>
<comment type="interaction">
    <interactant intactId="EBI-603350">
        <id>P28070</id>
    </interactant>
    <interactant intactId="EBI-930964">
        <id>P54253</id>
        <label>ATXN1</label>
    </interactant>
    <organismsDiffer>false</organismsDiffer>
    <experiments>6</experiments>
</comment>
<comment type="interaction">
    <interactant intactId="EBI-603350">
        <id>P28070</id>
    </interactant>
    <interactant intactId="EBI-765407">
        <id>P41182</id>
        <label>BCL6</label>
    </interactant>
    <organismsDiffer>false</organismsDiffer>
    <experiments>3</experiments>
</comment>
<comment type="interaction">
    <interactant intactId="EBI-603350">
        <id>P28070</id>
    </interactant>
    <interactant intactId="EBI-10961624">
        <id>Q2TAC2-2</id>
        <label>CCDC57</label>
    </interactant>
    <organismsDiffer>false</organismsDiffer>
    <experiments>3</experiments>
</comment>
<comment type="interaction">
    <interactant intactId="EBI-603350">
        <id>P28070</id>
    </interactant>
    <interactant intactId="EBI-743033">
        <id>Q9NZN8</id>
        <label>CNOT2</label>
    </interactant>
    <organismsDiffer>false</organismsDiffer>
    <experiments>3</experiments>
</comment>
<comment type="interaction">
    <interactant intactId="EBI-603350">
        <id>P28070</id>
    </interactant>
    <interactant intactId="EBI-740376">
        <id>Q86UW9</id>
        <label>DTX2</label>
    </interactant>
    <organismsDiffer>false</organismsDiffer>
    <experiments>3</experiments>
</comment>
<comment type="interaction">
    <interactant intactId="EBI-603350">
        <id>P28070</id>
    </interactant>
    <interactant intactId="EBI-5661036">
        <id>A1L4K1</id>
        <label>FSD2</label>
    </interactant>
    <organismsDiffer>false</organismsDiffer>
    <experiments>3</experiments>
</comment>
<comment type="interaction">
    <interactant intactId="EBI-603350">
        <id>P28070</id>
    </interactant>
    <interactant intactId="EBI-746969">
        <id>Q9H0R8</id>
        <label>GABARAPL1</label>
    </interactant>
    <organismsDiffer>false</organismsDiffer>
    <experiments>3</experiments>
</comment>
<comment type="interaction">
    <interactant intactId="EBI-603350">
        <id>P28070</id>
    </interactant>
    <interactant intactId="EBI-947242">
        <id>P28676</id>
        <label>GCA</label>
    </interactant>
    <organismsDiffer>false</organismsDiffer>
    <experiments>3</experiments>
</comment>
<comment type="interaction">
    <interactant intactId="EBI-603350">
        <id>P28070</id>
    </interactant>
    <interactant intactId="EBI-10329202">
        <id>Q9Y5R4</id>
        <label>HEMK1</label>
    </interactant>
    <organismsDiffer>false</organismsDiffer>
    <experiments>3</experiments>
</comment>
<comment type="interaction">
    <interactant intactId="EBI-603350">
        <id>P28070</id>
    </interactant>
    <interactant intactId="EBI-740220">
        <id>O14964</id>
        <label>HGS</label>
    </interactant>
    <organismsDiffer>false</organismsDiffer>
    <experiments>3</experiments>
</comment>
<comment type="interaction">
    <interactant intactId="EBI-603350">
        <id>P28070</id>
    </interactant>
    <interactant intactId="EBI-2556193">
        <id>Q63ZY3</id>
        <label>KANK2</label>
    </interactant>
    <organismsDiffer>false</organismsDiffer>
    <experiments>3</experiments>
</comment>
<comment type="interaction">
    <interactant intactId="EBI-603350">
        <id>P28070</id>
    </interactant>
    <interactant intactId="EBI-1048945">
        <id>Q3LI72</id>
        <label>KRTAP19-5</label>
    </interactant>
    <organismsDiffer>false</organismsDiffer>
    <experiments>3</experiments>
</comment>
<comment type="interaction">
    <interactant intactId="EBI-603350">
        <id>P28070</id>
    </interactant>
    <interactant intactId="EBI-5662487">
        <id>Q8TDC0</id>
        <label>MYOZ3</label>
    </interactant>
    <organismsDiffer>false</organismsDiffer>
    <experiments>3</experiments>
</comment>
<comment type="interaction">
    <interactant intactId="EBI-603350">
        <id>P28070</id>
    </interactant>
    <interactant intactId="EBI-10181968">
        <id>Q7Z4N8</id>
        <label>P4HA3</label>
    </interactant>
    <organismsDiffer>false</organismsDiffer>
    <experiments>3</experiments>
</comment>
<comment type="interaction">
    <interactant intactId="EBI-603350">
        <id>P28070</id>
    </interactant>
    <interactant intactId="EBI-357275">
        <id>Q99471</id>
        <label>PFDN5</label>
    </interactant>
    <organismsDiffer>false</organismsDiffer>
    <experiments>3</experiments>
</comment>
<comment type="interaction">
    <interactant intactId="EBI-603350">
        <id>P28070</id>
    </interactant>
    <interactant intactId="EBI-12138495">
        <id>Q99697-2</id>
        <label>PITX2</label>
    </interactant>
    <organismsDiffer>false</organismsDiffer>
    <experiments>3</experiments>
</comment>
<comment type="interaction">
    <interactant intactId="EBI-603350">
        <id>P28070</id>
    </interactant>
    <interactant intactId="EBI-602382">
        <id>Q16512</id>
        <label>PKN1</label>
    </interactant>
    <organismsDiffer>false</organismsDiffer>
    <experiments>3</experiments>
</comment>
<comment type="interaction">
    <interactant intactId="EBI-603350">
        <id>P28070</id>
    </interactant>
    <interactant intactId="EBI-696895">
        <id>Q9Y244</id>
        <label>POMP</label>
    </interactant>
    <organismsDiffer>false</organismsDiffer>
    <experiments>4</experiments>
</comment>
<comment type="interaction">
    <interactant intactId="EBI-603350">
        <id>P28070</id>
    </interactant>
    <interactant intactId="EBI-21251460">
        <id>O60260-5</id>
        <label>PRKN</label>
    </interactant>
    <organismsDiffer>false</organismsDiffer>
    <experiments>3</experiments>
</comment>
<comment type="interaction">
    <interactant intactId="EBI-603350">
        <id>P28070</id>
    </interactant>
    <interactant intactId="EBI-9027467">
        <id>O75360</id>
        <label>PROP1</label>
    </interactant>
    <organismsDiffer>false</organismsDiffer>
    <experiments>3</experiments>
</comment>
<comment type="interaction">
    <interactant intactId="EBI-603350">
        <id>P28070</id>
    </interactant>
    <interactant intactId="EBI-348380">
        <id>P25788</id>
        <label>PSMA3</label>
    </interactant>
    <organismsDiffer>false</organismsDiffer>
    <experiments>5</experiments>
</comment>
<comment type="interaction">
    <interactant intactId="EBI-603350">
        <id>P28070</id>
    </interactant>
    <interactant intactId="EBI-372273">
        <id>P20618</id>
        <label>PSMB1</label>
    </interactant>
    <organismsDiffer>false</organismsDiffer>
    <experiments>9</experiments>
</comment>
<comment type="interaction">
    <interactant intactId="EBI-603350">
        <id>P28070</id>
    </interactant>
    <interactant intactId="EBI-357828">
        <id>P28074</id>
        <label>PSMB5</label>
    </interactant>
    <organismsDiffer>false</organismsDiffer>
    <experiments>4</experiments>
</comment>
<comment type="interaction">
    <interactant intactId="EBI-603350">
        <id>P28070</id>
    </interactant>
    <interactant intactId="EBI-603319">
        <id>Q99436</id>
        <label>PSMB7</label>
    </interactant>
    <organismsDiffer>false</organismsDiffer>
    <experiments>4</experiments>
</comment>
<comment type="interaction">
    <interactant intactId="EBI-603350">
        <id>P28070</id>
    </interactant>
    <interactant intactId="EBI-396669">
        <id>Q9Y3C5</id>
        <label>RNF11</label>
    </interactant>
    <organismsDiffer>false</organismsDiffer>
    <experiments>3</experiments>
</comment>
<comment type="interaction">
    <interactant intactId="EBI-603350">
        <id>P28070</id>
    </interactant>
    <interactant intactId="EBI-1567153">
        <id>Q15797</id>
        <label>SMAD1</label>
    </interactant>
    <organismsDiffer>false</organismsDiffer>
    <experiments>4</experiments>
</comment>
<comment type="interaction">
    <interactant intactId="EBI-603350">
        <id>P28070</id>
    </interactant>
    <interactant intactId="EBI-12288855">
        <id>Q5JUK2</id>
        <label>SOHLH1</label>
    </interactant>
    <organismsDiffer>false</organismsDiffer>
    <experiments>3</experiments>
</comment>
<comment type="interaction">
    <interactant intactId="EBI-603350">
        <id>P28070</id>
    </interactant>
    <interactant intactId="EBI-742688">
        <id>Q9NZD8</id>
        <label>SPG21</label>
    </interactant>
    <organismsDiffer>false</organismsDiffer>
    <experiments>3</experiments>
</comment>
<comment type="interaction">
    <interactant intactId="EBI-603350">
        <id>P28070</id>
    </interactant>
    <interactant intactId="EBI-12082116">
        <id>Q9H987-2</id>
        <label>SYNPO2L</label>
    </interactant>
    <organismsDiffer>false</organismsDiffer>
    <experiments>3</experiments>
</comment>
<comment type="interaction">
    <interactant intactId="EBI-603350">
        <id>P28070</id>
    </interactant>
    <interactant intactId="EBI-372899">
        <id>Q13148</id>
        <label>TARDBP</label>
    </interactant>
    <organismsDiffer>false</organismsDiffer>
    <experiments>3</experiments>
</comment>
<comment type="interaction">
    <interactant intactId="EBI-603350">
        <id>P28070</id>
    </interactant>
    <interactant intactId="EBI-10239812">
        <id>Q96M29</id>
        <label>TEKT5</label>
    </interactant>
    <organismsDiffer>false</organismsDiffer>
    <experiments>3</experiments>
</comment>
<comment type="interaction">
    <interactant intactId="EBI-603350">
        <id>P28070</id>
    </interactant>
    <interactant intactId="EBI-11952651">
        <id>Q7Z6R9</id>
        <label>TFAP2D</label>
    </interactant>
    <organismsDiffer>false</organismsDiffer>
    <experiments>3</experiments>
</comment>
<comment type="interaction">
    <interactant intactId="EBI-603350">
        <id>P28070</id>
    </interactant>
    <interactant intactId="EBI-11741437">
        <id>Q08117-2</id>
        <label>TLE5</label>
    </interactant>
    <organismsDiffer>false</organismsDiffer>
    <experiments>5</experiments>
</comment>
<comment type="subcellular location">
    <subcellularLocation>
        <location evidence="4 18">Cytoplasm</location>
    </subcellularLocation>
    <subcellularLocation>
        <location evidence="4 18">Nucleus</location>
    </subcellularLocation>
    <text evidence="18">Translocated from the cytoplasm into the nucleus following interaction with AKIRIN2, which bridges the proteasome with the nuclear import receptor IPO9.</text>
</comment>
<comment type="induction">
    <text evidence="9">Up-regulated in fibrolamellar carcinomas.</text>
</comment>
<comment type="disease" evidence="13">
    <disease id="DI-05286">
        <name>Proteasome-associated autoinflammatory syndrome 3</name>
        <acronym>PRAAS3</acronym>
        <description>An autoinflammatory disorder characterized by onset in early infancy and recurrent fever, nodular dermatitis, myositis, panniculitis-induced lipodystrophy, lymphadenopathy, and immune dysregulation. Variable accompanying features may include joint contractures, hepatosplenomegaly, anemia, thrombocytopenia, recurrent infections, autoantibodies, and hypergammaglobulinemia. Some patients may have intracranial calcifications. PRAAS3 inheritance is autosomal recessive or digenic.</description>
        <dbReference type="MIM" id="617591"/>
    </disease>
    <text>The disease is caused by variants affecting distinct genetic loci, including the gene represented in this entry.</text>
</comment>
<comment type="similarity">
    <text evidence="1">Belongs to the peptidase T1B family.</text>
</comment>
<comment type="caution">
    <text evidence="29">A report observed N-glycosylation at Asn-83 (PubMed:19139490). However, as the protein does not localize in an extracellular compartment of the cell, additional evidence is required to confirm this result.</text>
</comment>
<keyword id="KW-0002">3D-structure</keyword>
<keyword id="KW-0007">Acetylation</keyword>
<keyword id="KW-0963">Cytoplasm</keyword>
<keyword id="KW-0903">Direct protein sequencing</keyword>
<keyword id="KW-0225">Disease variant</keyword>
<keyword id="KW-0945">Host-virus interaction</keyword>
<keyword id="KW-0539">Nucleus</keyword>
<keyword id="KW-0597">Phosphoprotein</keyword>
<keyword id="KW-0647">Proteasome</keyword>
<keyword id="KW-1267">Proteomics identification</keyword>
<keyword id="KW-1185">Reference proteome</keyword>
<organism>
    <name type="scientific">Homo sapiens</name>
    <name type="common">Human</name>
    <dbReference type="NCBI Taxonomy" id="9606"/>
    <lineage>
        <taxon>Eukaryota</taxon>
        <taxon>Metazoa</taxon>
        <taxon>Chordata</taxon>
        <taxon>Craniata</taxon>
        <taxon>Vertebrata</taxon>
        <taxon>Euteleostomi</taxon>
        <taxon>Mammalia</taxon>
        <taxon>Eutheria</taxon>
        <taxon>Euarchontoglires</taxon>
        <taxon>Primates</taxon>
        <taxon>Haplorrhini</taxon>
        <taxon>Catarrhini</taxon>
        <taxon>Hominidae</taxon>
        <taxon>Homo</taxon>
    </lineage>
</organism>
<reference key="1">
    <citation type="journal article" date="1994" name="Biochim. Biophys. Acta">
        <title>Sequence analyses and inter-species comparisons of three novel human proteasomal subunits, HsN3, HsC7-I and HsC10-II, confine potential proteolytic active-site residues.</title>
        <authorList>
            <person name="Nothwang H.G."/>
            <person name="Tamura T."/>
            <person name="Tanaka K."/>
            <person name="Ichihara A."/>
        </authorList>
    </citation>
    <scope>NUCLEOTIDE SEQUENCE [MRNA]</scope>
    <scope>VARIANT THR-234</scope>
</reference>
<reference key="2">
    <citation type="journal article" date="2004" name="Nat. Genet.">
        <title>Complete sequencing and characterization of 21,243 full-length human cDNAs.</title>
        <authorList>
            <person name="Ota T."/>
            <person name="Suzuki Y."/>
            <person name="Nishikawa T."/>
            <person name="Otsuki T."/>
            <person name="Sugiyama T."/>
            <person name="Irie R."/>
            <person name="Wakamatsu A."/>
            <person name="Hayashi K."/>
            <person name="Sato H."/>
            <person name="Nagai K."/>
            <person name="Kimura K."/>
            <person name="Makita H."/>
            <person name="Sekine M."/>
            <person name="Obayashi M."/>
            <person name="Nishi T."/>
            <person name="Shibahara T."/>
            <person name="Tanaka T."/>
            <person name="Ishii S."/>
            <person name="Yamamoto J."/>
            <person name="Saito K."/>
            <person name="Kawai Y."/>
            <person name="Isono Y."/>
            <person name="Nakamura Y."/>
            <person name="Nagahari K."/>
            <person name="Murakami K."/>
            <person name="Yasuda T."/>
            <person name="Iwayanagi T."/>
            <person name="Wagatsuma M."/>
            <person name="Shiratori A."/>
            <person name="Sudo H."/>
            <person name="Hosoiri T."/>
            <person name="Kaku Y."/>
            <person name="Kodaira H."/>
            <person name="Kondo H."/>
            <person name="Sugawara M."/>
            <person name="Takahashi M."/>
            <person name="Kanda K."/>
            <person name="Yokoi T."/>
            <person name="Furuya T."/>
            <person name="Kikkawa E."/>
            <person name="Omura Y."/>
            <person name="Abe K."/>
            <person name="Kamihara K."/>
            <person name="Katsuta N."/>
            <person name="Sato K."/>
            <person name="Tanikawa M."/>
            <person name="Yamazaki M."/>
            <person name="Ninomiya K."/>
            <person name="Ishibashi T."/>
            <person name="Yamashita H."/>
            <person name="Murakawa K."/>
            <person name="Fujimori K."/>
            <person name="Tanai H."/>
            <person name="Kimata M."/>
            <person name="Watanabe M."/>
            <person name="Hiraoka S."/>
            <person name="Chiba Y."/>
            <person name="Ishida S."/>
            <person name="Ono Y."/>
            <person name="Takiguchi S."/>
            <person name="Watanabe S."/>
            <person name="Yosida M."/>
            <person name="Hotuta T."/>
            <person name="Kusano J."/>
            <person name="Kanehori K."/>
            <person name="Takahashi-Fujii A."/>
            <person name="Hara H."/>
            <person name="Tanase T.-O."/>
            <person name="Nomura Y."/>
            <person name="Togiya S."/>
            <person name="Komai F."/>
            <person name="Hara R."/>
            <person name="Takeuchi K."/>
            <person name="Arita M."/>
            <person name="Imose N."/>
            <person name="Musashino K."/>
            <person name="Yuuki H."/>
            <person name="Oshima A."/>
            <person name="Sasaki N."/>
            <person name="Aotsuka S."/>
            <person name="Yoshikawa Y."/>
            <person name="Matsunawa H."/>
            <person name="Ichihara T."/>
            <person name="Shiohata N."/>
            <person name="Sano S."/>
            <person name="Moriya S."/>
            <person name="Momiyama H."/>
            <person name="Satoh N."/>
            <person name="Takami S."/>
            <person name="Terashima Y."/>
            <person name="Suzuki O."/>
            <person name="Nakagawa S."/>
            <person name="Senoh A."/>
            <person name="Mizoguchi H."/>
            <person name="Goto Y."/>
            <person name="Shimizu F."/>
            <person name="Wakebe H."/>
            <person name="Hishigaki H."/>
            <person name="Watanabe T."/>
            <person name="Sugiyama A."/>
            <person name="Takemoto M."/>
            <person name="Kawakami B."/>
            <person name="Yamazaki M."/>
            <person name="Watanabe K."/>
            <person name="Kumagai A."/>
            <person name="Itakura S."/>
            <person name="Fukuzumi Y."/>
            <person name="Fujimori Y."/>
            <person name="Komiyama M."/>
            <person name="Tashiro H."/>
            <person name="Tanigami A."/>
            <person name="Fujiwara T."/>
            <person name="Ono T."/>
            <person name="Yamada K."/>
            <person name="Fujii Y."/>
            <person name="Ozaki K."/>
            <person name="Hirao M."/>
            <person name="Ohmori Y."/>
            <person name="Kawabata A."/>
            <person name="Hikiji T."/>
            <person name="Kobatake N."/>
            <person name="Inagaki H."/>
            <person name="Ikema Y."/>
            <person name="Okamoto S."/>
            <person name="Okitani R."/>
            <person name="Kawakami T."/>
            <person name="Noguchi S."/>
            <person name="Itoh T."/>
            <person name="Shigeta K."/>
            <person name="Senba T."/>
            <person name="Matsumura K."/>
            <person name="Nakajima Y."/>
            <person name="Mizuno T."/>
            <person name="Morinaga M."/>
            <person name="Sasaki M."/>
            <person name="Togashi T."/>
            <person name="Oyama M."/>
            <person name="Hata H."/>
            <person name="Watanabe M."/>
            <person name="Komatsu T."/>
            <person name="Mizushima-Sugano J."/>
            <person name="Satoh T."/>
            <person name="Shirai Y."/>
            <person name="Takahashi Y."/>
            <person name="Nakagawa K."/>
            <person name="Okumura K."/>
            <person name="Nagase T."/>
            <person name="Nomura N."/>
            <person name="Kikuchi H."/>
            <person name="Masuho Y."/>
            <person name="Yamashita R."/>
            <person name="Nakai K."/>
            <person name="Yada T."/>
            <person name="Nakamura Y."/>
            <person name="Ohara O."/>
            <person name="Isogai T."/>
            <person name="Sugano S."/>
        </authorList>
    </citation>
    <scope>NUCLEOTIDE SEQUENCE [LARGE SCALE MRNA]</scope>
    <scope>VARIANT THR-234</scope>
    <source>
        <tissue>Brain</tissue>
    </source>
</reference>
<reference key="3">
    <citation type="submission" date="2004-06" db="EMBL/GenBank/DDBJ databases">
        <title>Cloning of human full open reading frames in Gateway(TM) system entry vector (pDONR201).</title>
        <authorList>
            <person name="Ebert L."/>
            <person name="Schick M."/>
            <person name="Neubert P."/>
            <person name="Schatten R."/>
            <person name="Henze S."/>
            <person name="Korn B."/>
        </authorList>
    </citation>
    <scope>NUCLEOTIDE SEQUENCE [LARGE SCALE MRNA]</scope>
</reference>
<reference key="4">
    <citation type="submission" date="2004-10" db="EMBL/GenBank/DDBJ databases">
        <title>Cloning of human full-length CDSs in BD Creator(TM) system donor vector.</title>
        <authorList>
            <person name="Kalnine N."/>
            <person name="Chen X."/>
            <person name="Rolfs A."/>
            <person name="Halleck A."/>
            <person name="Hines L."/>
            <person name="Eisenstein S."/>
            <person name="Koundinya M."/>
            <person name="Raphael J."/>
            <person name="Moreira D."/>
            <person name="Kelley T."/>
            <person name="LaBaer J."/>
            <person name="Lin Y."/>
            <person name="Phelan M."/>
            <person name="Farmer A."/>
        </authorList>
    </citation>
    <scope>NUCLEOTIDE SEQUENCE [LARGE SCALE MRNA]</scope>
    <scope>VARIANT THR-234</scope>
</reference>
<reference key="5">
    <citation type="journal article" date="2006" name="Nature">
        <title>The DNA sequence and biological annotation of human chromosome 1.</title>
        <authorList>
            <person name="Gregory S.G."/>
            <person name="Barlow K.F."/>
            <person name="McLay K.E."/>
            <person name="Kaul R."/>
            <person name="Swarbreck D."/>
            <person name="Dunham A."/>
            <person name="Scott C.E."/>
            <person name="Howe K.L."/>
            <person name="Woodfine K."/>
            <person name="Spencer C.C.A."/>
            <person name="Jones M.C."/>
            <person name="Gillson C."/>
            <person name="Searle S."/>
            <person name="Zhou Y."/>
            <person name="Kokocinski F."/>
            <person name="McDonald L."/>
            <person name="Evans R."/>
            <person name="Phillips K."/>
            <person name="Atkinson A."/>
            <person name="Cooper R."/>
            <person name="Jones C."/>
            <person name="Hall R.E."/>
            <person name="Andrews T.D."/>
            <person name="Lloyd C."/>
            <person name="Ainscough R."/>
            <person name="Almeida J.P."/>
            <person name="Ambrose K.D."/>
            <person name="Anderson F."/>
            <person name="Andrew R.W."/>
            <person name="Ashwell R.I.S."/>
            <person name="Aubin K."/>
            <person name="Babbage A.K."/>
            <person name="Bagguley C.L."/>
            <person name="Bailey J."/>
            <person name="Beasley H."/>
            <person name="Bethel G."/>
            <person name="Bird C.P."/>
            <person name="Bray-Allen S."/>
            <person name="Brown J.Y."/>
            <person name="Brown A.J."/>
            <person name="Buckley D."/>
            <person name="Burton J."/>
            <person name="Bye J."/>
            <person name="Carder C."/>
            <person name="Chapman J.C."/>
            <person name="Clark S.Y."/>
            <person name="Clarke G."/>
            <person name="Clee C."/>
            <person name="Cobley V."/>
            <person name="Collier R.E."/>
            <person name="Corby N."/>
            <person name="Coville G.J."/>
            <person name="Davies J."/>
            <person name="Deadman R."/>
            <person name="Dunn M."/>
            <person name="Earthrowl M."/>
            <person name="Ellington A.G."/>
            <person name="Errington H."/>
            <person name="Frankish A."/>
            <person name="Frankland J."/>
            <person name="French L."/>
            <person name="Garner P."/>
            <person name="Garnett J."/>
            <person name="Gay L."/>
            <person name="Ghori M.R.J."/>
            <person name="Gibson R."/>
            <person name="Gilby L.M."/>
            <person name="Gillett W."/>
            <person name="Glithero R.J."/>
            <person name="Grafham D.V."/>
            <person name="Griffiths C."/>
            <person name="Griffiths-Jones S."/>
            <person name="Grocock R."/>
            <person name="Hammond S."/>
            <person name="Harrison E.S.I."/>
            <person name="Hart E."/>
            <person name="Haugen E."/>
            <person name="Heath P.D."/>
            <person name="Holmes S."/>
            <person name="Holt K."/>
            <person name="Howden P.J."/>
            <person name="Hunt A.R."/>
            <person name="Hunt S.E."/>
            <person name="Hunter G."/>
            <person name="Isherwood J."/>
            <person name="James R."/>
            <person name="Johnson C."/>
            <person name="Johnson D."/>
            <person name="Joy A."/>
            <person name="Kay M."/>
            <person name="Kershaw J.K."/>
            <person name="Kibukawa M."/>
            <person name="Kimberley A.M."/>
            <person name="King A."/>
            <person name="Knights A.J."/>
            <person name="Lad H."/>
            <person name="Laird G."/>
            <person name="Lawlor S."/>
            <person name="Leongamornlert D.A."/>
            <person name="Lloyd D.M."/>
            <person name="Loveland J."/>
            <person name="Lovell J."/>
            <person name="Lush M.J."/>
            <person name="Lyne R."/>
            <person name="Martin S."/>
            <person name="Mashreghi-Mohammadi M."/>
            <person name="Matthews L."/>
            <person name="Matthews N.S.W."/>
            <person name="McLaren S."/>
            <person name="Milne S."/>
            <person name="Mistry S."/>
            <person name="Moore M.J.F."/>
            <person name="Nickerson T."/>
            <person name="O'Dell C.N."/>
            <person name="Oliver K."/>
            <person name="Palmeiri A."/>
            <person name="Palmer S.A."/>
            <person name="Parker A."/>
            <person name="Patel D."/>
            <person name="Pearce A.V."/>
            <person name="Peck A.I."/>
            <person name="Pelan S."/>
            <person name="Phelps K."/>
            <person name="Phillimore B.J."/>
            <person name="Plumb R."/>
            <person name="Rajan J."/>
            <person name="Raymond C."/>
            <person name="Rouse G."/>
            <person name="Saenphimmachak C."/>
            <person name="Sehra H.K."/>
            <person name="Sheridan E."/>
            <person name="Shownkeen R."/>
            <person name="Sims S."/>
            <person name="Skuce C.D."/>
            <person name="Smith M."/>
            <person name="Steward C."/>
            <person name="Subramanian S."/>
            <person name="Sycamore N."/>
            <person name="Tracey A."/>
            <person name="Tromans A."/>
            <person name="Van Helmond Z."/>
            <person name="Wall M."/>
            <person name="Wallis J.M."/>
            <person name="White S."/>
            <person name="Whitehead S.L."/>
            <person name="Wilkinson J.E."/>
            <person name="Willey D.L."/>
            <person name="Williams H."/>
            <person name="Wilming L."/>
            <person name="Wray P.W."/>
            <person name="Wu Z."/>
            <person name="Coulson A."/>
            <person name="Vaudin M."/>
            <person name="Sulston J.E."/>
            <person name="Durbin R.M."/>
            <person name="Hubbard T."/>
            <person name="Wooster R."/>
            <person name="Dunham I."/>
            <person name="Carter N.P."/>
            <person name="McVean G."/>
            <person name="Ross M.T."/>
            <person name="Harrow J."/>
            <person name="Olson M.V."/>
            <person name="Beck S."/>
            <person name="Rogers J."/>
            <person name="Bentley D.R."/>
        </authorList>
    </citation>
    <scope>NUCLEOTIDE SEQUENCE [LARGE SCALE GENOMIC DNA]</scope>
</reference>
<reference key="6">
    <citation type="submission" date="2005-09" db="EMBL/GenBank/DDBJ databases">
        <authorList>
            <person name="Mural R.J."/>
            <person name="Istrail S."/>
            <person name="Sutton G.G."/>
            <person name="Florea L."/>
            <person name="Halpern A.L."/>
            <person name="Mobarry C.M."/>
            <person name="Lippert R."/>
            <person name="Walenz B."/>
            <person name="Shatkay H."/>
            <person name="Dew I."/>
            <person name="Miller J.R."/>
            <person name="Flanigan M.J."/>
            <person name="Edwards N.J."/>
            <person name="Bolanos R."/>
            <person name="Fasulo D."/>
            <person name="Halldorsson B.V."/>
            <person name="Hannenhalli S."/>
            <person name="Turner R."/>
            <person name="Yooseph S."/>
            <person name="Lu F."/>
            <person name="Nusskern D.R."/>
            <person name="Shue B.C."/>
            <person name="Zheng X.H."/>
            <person name="Zhong F."/>
            <person name="Delcher A.L."/>
            <person name="Huson D.H."/>
            <person name="Kravitz S.A."/>
            <person name="Mouchard L."/>
            <person name="Reinert K."/>
            <person name="Remington K.A."/>
            <person name="Clark A.G."/>
            <person name="Waterman M.S."/>
            <person name="Eichler E.E."/>
            <person name="Adams M.D."/>
            <person name="Hunkapiller M.W."/>
            <person name="Myers E.W."/>
            <person name="Venter J.C."/>
        </authorList>
    </citation>
    <scope>NUCLEOTIDE SEQUENCE [LARGE SCALE GENOMIC DNA]</scope>
    <scope>VARIANT THR-234</scope>
</reference>
<reference key="7">
    <citation type="journal article" date="1994" name="FEBS Lett.">
        <title>Cloning and expression of a human pro(tea)some beta-subunit cDNA: a homologue of the yeast PRE4-subunit essential for peptidylglutamyl-peptide hydrolase activity.</title>
        <authorList>
            <person name="Gerards W.L."/>
            <person name="Hop F.W."/>
            <person name="Hendriks I.L."/>
            <person name="Bloemendal H."/>
        </authorList>
    </citation>
    <scope>NUCLEOTIDE SEQUENCE [MRNA] OF 31-264</scope>
    <scope>VARIANT THR-234</scope>
</reference>
<reference key="8">
    <citation type="journal article" date="1990" name="Biochim. Biophys. Acta">
        <title>Relationships among the subunits of the high molecular weight proteinase, macropain (proteasome).</title>
        <authorList>
            <person name="Lee L.W."/>
            <person name="Moomaw C.R."/>
            <person name="Orth K."/>
            <person name="McGuire M.J."/>
            <person name="DeMartino G.N."/>
            <person name="Slaughter C.A."/>
        </authorList>
    </citation>
    <scope>PROTEIN SEQUENCE OF 46-73</scope>
</reference>
<reference key="9">
    <citation type="submission" date="1992-06" db="UniProtKB">
        <authorList>
            <person name="Hochstrasser D.F."/>
            <person name="Frutiger S."/>
            <person name="Paquet N."/>
            <person name="Bairoch A."/>
            <person name="Ravier F."/>
            <person name="Pasquali C."/>
            <person name="Sanchez J.-C."/>
            <person name="Tissot J.-D."/>
            <person name="Bjellqvist B."/>
            <person name="Vargas R."/>
            <person name="Appel R.D."/>
            <person name="Hughes G.J."/>
        </authorList>
    </citation>
    <scope>PROTEIN SEQUENCE OF 46-57</scope>
    <source>
        <tissue>Liver</tissue>
    </source>
</reference>
<reference key="10">
    <citation type="journal article" date="1994" name="Biochem. Biophys. Res. Commun.">
        <title>Human proteasome subunits from 2-dimensional gels identified by partial sequencing.</title>
        <authorList>
            <person name="Kristensen P."/>
            <person name="Johnsen A.H."/>
            <person name="Uerkvitz W."/>
            <person name="Tanaka K."/>
            <person name="Hendil K.B."/>
        </authorList>
    </citation>
    <scope>PROTEIN SEQUENCE OF 132-139; 220-224 AND 241-259</scope>
</reference>
<reference key="11">
    <citation type="journal article" date="1992" name="Electrophoresis">
        <title>Microsequences of 145 proteins recorded in the two-dimensional gel protein database of normal human epidermal keratinocytes.</title>
        <authorList>
            <person name="Rasmussen H.H."/>
            <person name="van Damme J."/>
            <person name="Puype M."/>
            <person name="Gesser B."/>
            <person name="Celis J.E."/>
            <person name="Vandekerckhove J."/>
        </authorList>
    </citation>
    <scope>PROTEIN SEQUENCE OF 232-237 AND 241-253</scope>
    <source>
        <tissue>Keratinocyte</tissue>
    </source>
</reference>
<reference key="12">
    <citation type="journal article" date="1996" name="Nature">
        <title>A role for the proteasome regulator PA28alpha in antigen presentation.</title>
        <authorList>
            <person name="Groettrup M."/>
            <person name="Soza A."/>
            <person name="Eggers M."/>
            <person name="Kuehn L."/>
            <person name="Dick T.P."/>
            <person name="Schild H."/>
            <person name="Rammensee H.G."/>
            <person name="Koszinowski U.H."/>
            <person name="Kloetzel P.M."/>
        </authorList>
    </citation>
    <scope>FUNCTION IN ANTIGEN PRESENTATION</scope>
</reference>
<reference key="13">
    <citation type="journal article" date="1996" name="Nature">
        <title>Effects on NF-kappa B1/p105 processing of the interaction between the HTLV-1 transactivator Tax and the proteasome.</title>
        <authorList>
            <person name="Rousset R."/>
            <person name="Desbois C."/>
            <person name="Bantignies F."/>
            <person name="Jalinot P."/>
        </authorList>
    </citation>
    <scope>INTERACTION WITH HTLV-1 PROTEIN TAX (MICROBIAL INFECTION)</scope>
</reference>
<reference key="14">
    <citation type="journal article" date="1997" name="Virology">
        <title>HsN3 proteasomal subunit as a target for human immunodeficiency virus type 1 Nef protein.</title>
        <authorList>
            <person name="Rossi F."/>
            <person name="Evstafieva A."/>
            <person name="Pedrali-Noy G."/>
            <person name="Gallina A."/>
            <person name="Milanesi G."/>
        </authorList>
    </citation>
    <scope>INTERACTION WITH HIV-1 NEF (MICROBIAL INFECTION)</scope>
</reference>
<reference key="15">
    <citation type="journal article" date="2001" name="J. Biol. Chem.">
        <title>Proteasomal degradation of Smad1 induced by bone morphogenetic proteins.</title>
        <authorList>
            <person name="Gruendler C."/>
            <person name="Lin Y."/>
            <person name="Farley J."/>
            <person name="Wang T."/>
        </authorList>
    </citation>
    <scope>IDENTIFICATION IN A COMPLEX WITH SMAD1 AND OAZ1</scope>
</reference>
<reference key="16">
    <citation type="journal article" date="2002" name="BMC Cell Biol.">
        <title>A novel link between the proteasome pathway and the signal transduction pathway of the bone morphogenetic proteins (BMPs).</title>
        <authorList>
            <person name="Lin Y."/>
            <person name="Martin J."/>
            <person name="Gruendler C."/>
            <person name="Farley J."/>
            <person name="Meng X."/>
            <person name="Li B.-Y."/>
            <person name="Lechleider R."/>
            <person name="Huff C."/>
            <person name="Kim R.H."/>
            <person name="Grasser W.A."/>
            <person name="Paralkar V."/>
            <person name="Wang T."/>
        </authorList>
    </citation>
    <scope>IDENTIFICATION IN A COMPLEX WITH SMAD1 AND OAZ1</scope>
    <scope>FUNCTION</scope>
</reference>
<reference key="17">
    <citation type="journal article" date="2002" name="Mol. Biol. Cell">
        <title>Clastosome: a subtype of nuclear body enriched in 19S and 20S proteasomes, ubiquitin, and protein substrates of proteasome.</title>
        <authorList>
            <person name="Lafarga M."/>
            <person name="Berciano M.T."/>
            <person name="Pena E."/>
            <person name="Mayo I."/>
            <person name="Castano J.G."/>
            <person name="Bohmann D."/>
            <person name="Rodrigues J.P."/>
            <person name="Tavanez J.P."/>
            <person name="Carmo-Fonseca M."/>
        </authorList>
    </citation>
    <scope>SUBCELLULAR LOCATION</scope>
</reference>
<reference key="18">
    <citation type="journal article" date="2003" name="FEBS Lett.">
        <title>Human immunodeficiency virus-1 Tat protein interacts with distinct proteasomal alpha and beta subunits.</title>
        <authorList>
            <person name="Apcher G.S."/>
            <person name="Heink S."/>
            <person name="Zantopf D."/>
            <person name="Kloetzel P.-M."/>
            <person name="Schmid H.-P."/>
            <person name="Mayer R.J."/>
            <person name="Krueger E."/>
        </authorList>
    </citation>
    <scope>INTERACTION WITH HIV-1 TAT (MICROBIAL INFECTION)</scope>
</reference>
<reference key="19">
    <citation type="journal article" date="2004" name="Biomacromolecules">
        <title>20S proteasome prevents aggregation of heat-denatured proteins without PA700 regulatory subcomplex like a molecular chaperone.</title>
        <authorList>
            <person name="Yano M."/>
            <person name="Koumoto Y."/>
            <person name="Kanesaki Y."/>
            <person name="Wu X."/>
            <person name="Kido H."/>
        </authorList>
    </citation>
    <scope>FUNCTION</scope>
</reference>
<reference key="20">
    <citation type="journal article" date="2005" name="Biochem. J.">
        <title>Interaction of U-box E3 ligase SNEV with PSMB4, the beta7 subunit of the 20 S proteasome.</title>
        <authorList>
            <person name="Loescher M."/>
            <person name="Fortschegger K."/>
            <person name="Ritter G."/>
            <person name="Wostry M."/>
            <person name="Voglauer R."/>
            <person name="Schmid J.A."/>
            <person name="Watters S."/>
            <person name="Rivett A.J."/>
            <person name="Ajuh P."/>
            <person name="Lamond A.I."/>
            <person name="Katinger H."/>
            <person name="Grillari J."/>
        </authorList>
    </citation>
    <scope>INTERACTION WITH PRPF19</scope>
</reference>
<reference key="21">
    <citation type="journal article" date="2005" name="Nat. Biotechnol.">
        <title>Immunoaffinity profiling of tyrosine phosphorylation in cancer cells.</title>
        <authorList>
            <person name="Rush J."/>
            <person name="Moritz A."/>
            <person name="Lee K.A."/>
            <person name="Guo A."/>
            <person name="Goss V.L."/>
            <person name="Spek E.J."/>
            <person name="Zhang H."/>
            <person name="Zha X.-M."/>
            <person name="Polakiewicz R.D."/>
            <person name="Comb M.J."/>
        </authorList>
    </citation>
    <scope>PHOSPHORYLATION [LARGE SCALE ANALYSIS] AT TYR-102</scope>
    <scope>IDENTIFICATION BY MASS SPECTROMETRY [LARGE SCALE ANALYSIS]</scope>
</reference>
<reference key="22">
    <citation type="journal article" date="2007" name="Biochemistry">
        <title>Mass spectrometric characterization of the affinity-purified human 26S proteasome complex.</title>
        <authorList>
            <person name="Wang X."/>
            <person name="Chen C.-F."/>
            <person name="Baker P.R."/>
            <person name="Chen P.-L."/>
            <person name="Kaiser P."/>
            <person name="Huang L."/>
        </authorList>
    </citation>
    <scope>IDENTIFICATION BY MASS SPECTROMETRY [LARGE SCALE ANALYSIS]</scope>
    <source>
        <tissue>Embryonic kidney</tissue>
    </source>
</reference>
<reference key="23">
    <citation type="journal article" date="2007" name="Hum. Pathol.">
        <title>Fibrolamellar carcinomas show overexpression of genes in the RAS, MAPK, PIK3, and xenobiotic degradation pathways.</title>
        <authorList>
            <person name="Kannangai R."/>
            <person name="Vivekanandan P."/>
            <person name="Martinez-Murillo F."/>
            <person name="Choti M."/>
            <person name="Torbenson M."/>
        </authorList>
    </citation>
    <scope>INDUCTION</scope>
</reference>
<reference key="24">
    <citation type="journal article" date="2009" name="Mol. Cell. Proteomics">
        <title>A strategy for precise and large scale identification of core fucosylated glycoproteins.</title>
        <authorList>
            <person name="Jia W."/>
            <person name="Lu Z."/>
            <person name="Fu Y."/>
            <person name="Wang H.P."/>
            <person name="Wang L.H."/>
            <person name="Chi H."/>
            <person name="Yuan Z.F."/>
            <person name="Zheng Z.B."/>
            <person name="Song L.N."/>
            <person name="Han H.H."/>
            <person name="Liang Y.M."/>
            <person name="Wang J.L."/>
            <person name="Cai Y."/>
            <person name="Zhang Y.K."/>
            <person name="Deng Y.L."/>
            <person name="Ying W.T."/>
            <person name="He S.M."/>
            <person name="Qian X.H."/>
        </authorList>
    </citation>
    <scope>IDENTIFICATION</scope>
</reference>
<reference key="25">
    <citation type="journal article" date="2011" name="BMC Syst. Biol.">
        <title>Initial characterization of the human central proteome.</title>
        <authorList>
            <person name="Burkard T.R."/>
            <person name="Planyavsky M."/>
            <person name="Kaupe I."/>
            <person name="Breitwieser F.P."/>
            <person name="Buerckstuemmer T."/>
            <person name="Bennett K.L."/>
            <person name="Superti-Furga G."/>
            <person name="Colinge J."/>
        </authorList>
    </citation>
    <scope>IDENTIFICATION BY MASS SPECTROMETRY [LARGE SCALE ANALYSIS]</scope>
</reference>
<reference key="26">
    <citation type="journal article" date="2012" name="Mol. Cell. Proteomics">
        <title>Comparative large-scale characterisation of plant vs. mammal proteins reveals similar and idiosyncratic N-alpha acetylation features.</title>
        <authorList>
            <person name="Bienvenut W.V."/>
            <person name="Sumpton D."/>
            <person name="Martinez A."/>
            <person name="Lilla S."/>
            <person name="Espagne C."/>
            <person name="Meinnel T."/>
            <person name="Giglione C."/>
        </authorList>
    </citation>
    <scope>ACETYLATION [LARGE SCALE ANALYSIS] AT MET-1</scope>
    <scope>IDENTIFICATION BY MASS SPECTROMETRY [LARGE SCALE ANALYSIS]</scope>
</reference>
<reference key="27">
    <citation type="journal article" date="2012" name="Proc. Natl. Acad. Sci. U.S.A.">
        <title>N-terminal acetylome analyses and functional insights of the N-terminal acetyltransferase NatB.</title>
        <authorList>
            <person name="Van Damme P."/>
            <person name="Lasa M."/>
            <person name="Polevoda B."/>
            <person name="Gazquez C."/>
            <person name="Elosegui-Artola A."/>
            <person name="Kim D.S."/>
            <person name="De Juan-Pardo E."/>
            <person name="Demeyer K."/>
            <person name="Hole K."/>
            <person name="Larrea E."/>
            <person name="Timmerman E."/>
            <person name="Prieto J."/>
            <person name="Arnesen T."/>
            <person name="Sherman F."/>
            <person name="Gevaert K."/>
            <person name="Aldabe R."/>
        </authorList>
    </citation>
    <scope>ACETYLATION [LARGE SCALE ANALYSIS] AT MET-1</scope>
    <scope>IDENTIFICATION BY MASS SPECTROMETRY [LARGE SCALE ANALYSIS]</scope>
</reference>
<reference key="28">
    <citation type="journal article" date="2013" name="Annu. Rev. Biochem.">
        <title>Molecular architecture and assembly of the eukaryotic proteasome.</title>
        <authorList>
            <person name="Tomko R.J. Jr."/>
            <person name="Hochstrasser M."/>
        </authorList>
    </citation>
    <scope>NOMENCLATURE</scope>
</reference>
<reference key="29">
    <citation type="journal article" date="2013" name="J. Proteome Res.">
        <title>Toward a comprehensive characterization of a human cancer cell phosphoproteome.</title>
        <authorList>
            <person name="Zhou H."/>
            <person name="Di Palma S."/>
            <person name="Preisinger C."/>
            <person name="Peng M."/>
            <person name="Polat A.N."/>
            <person name="Heck A.J."/>
            <person name="Mohammed S."/>
        </authorList>
    </citation>
    <scope>PHOSPHORYLATION [LARGE SCALE ANALYSIS] AT SER-26</scope>
    <scope>IDENTIFICATION BY MASS SPECTROMETRY [LARGE SCALE ANALYSIS]</scope>
    <source>
        <tissue>Erythroleukemia</tissue>
    </source>
</reference>
<reference key="30">
    <citation type="journal article" date="2014" name="J. Proteomics">
        <title>An enzyme assisted RP-RPLC approach for in-depth analysis of human liver phosphoproteome.</title>
        <authorList>
            <person name="Bian Y."/>
            <person name="Song C."/>
            <person name="Cheng K."/>
            <person name="Dong M."/>
            <person name="Wang F."/>
            <person name="Huang J."/>
            <person name="Sun D."/>
            <person name="Wang L."/>
            <person name="Ye M."/>
            <person name="Zou H."/>
        </authorList>
    </citation>
    <scope>IDENTIFICATION BY MASS SPECTROMETRY [LARGE SCALE ANALYSIS]</scope>
    <source>
        <tissue>Liver</tissue>
    </source>
</reference>
<reference key="31">
    <citation type="journal article" date="2015" name="J. Clin. Invest.">
        <title>Additive loss-of-function proteasome subunit mutations in CANDLE/PRAAS patients promote type I IFN production.</title>
        <authorList>
            <person name="Brehm A."/>
            <person name="Liu Y."/>
            <person name="Sheikh A."/>
            <person name="Marrero B."/>
            <person name="Omoyinmi E."/>
            <person name="Zhou Q."/>
            <person name="Montealegre G."/>
            <person name="Biancotto A."/>
            <person name="Reinhardt A."/>
            <person name="Almeida de Jesus A."/>
            <person name="Pelletier M."/>
            <person name="Tsai W.L."/>
            <person name="Remmers E.F."/>
            <person name="Kardava L."/>
            <person name="Hill S."/>
            <person name="Kim H."/>
            <person name="Lachmann H.J."/>
            <person name="Megarbane A."/>
            <person name="Chae J.J."/>
            <person name="Brady J."/>
            <person name="Castillo R.D."/>
            <person name="Brown D."/>
            <person name="Casano A.V."/>
            <person name="Gao L."/>
            <person name="Chapelle D."/>
            <person name="Huang Y."/>
            <person name="Stone D."/>
            <person name="Chen Y."/>
            <person name="Sotzny F."/>
            <person name="Lee C.C."/>
            <person name="Kastner D.L."/>
            <person name="Torrelo A."/>
            <person name="Zlotogorski A."/>
            <person name="Moir S."/>
            <person name="Gadina M."/>
            <person name="McCoy P."/>
            <person name="Wesley R."/>
            <person name="Rother K.I."/>
            <person name="Hildebrand P.W."/>
            <person name="Brogan P."/>
            <person name="Krueger E."/>
            <person name="Aksentijevich I."/>
            <person name="Goldbach-Mansky R."/>
        </authorList>
    </citation>
    <scope>INVOLVEMENT IN PRAAS3</scope>
    <scope>VARIANTS PRAAS3 212-ASP--VAL-214 DEL AND 222-TYR--GLU-264 DEL</scope>
    <scope>CHARACTERIZATION OF VARIANT PRAAS3 212-ASP--VAL-214 DEL AND 222-TYR--GLU-264 DEL</scope>
</reference>
<reference key="32">
    <citation type="journal article" date="2016" name="J. Clin. Invest.">
        <authorList>
            <person name="Brehm A."/>
            <person name="Liu Y."/>
            <person name="Sheikh A."/>
            <person name="Marrero B."/>
            <person name="Omoyinmi E."/>
            <person name="Zhou Q."/>
            <person name="Montealegre G."/>
            <person name="Biancotto A."/>
            <person name="Reinhardt A."/>
            <person name="de Jesus A.A."/>
            <person name="Pelletier M."/>
            <person name="Tsai W.L."/>
            <person name="Remmers E.F."/>
            <person name="Kardava L."/>
            <person name="Hill S."/>
            <person name="Kim H."/>
            <person name="Lachmann H.J."/>
            <person name="Megarbane A."/>
            <person name="Chae J.J."/>
            <person name="Brady J."/>
            <person name="Castillo R.D."/>
            <person name="Brown D."/>
            <person name="Casano A.V."/>
            <person name="Gao L."/>
            <person name="Chapelle D."/>
            <person name="Huang Y."/>
            <person name="Stone D."/>
            <person name="Chen Y."/>
            <person name="Sotzny F."/>
            <person name="Lee C.C."/>
            <person name="Kastner D.L."/>
            <person name="Torrelo A."/>
            <person name="Zlotogorski A."/>
            <person name="Moir S."/>
            <person name="Gadina M."/>
            <person name="McCoy P."/>
            <person name="Wesley R."/>
            <person name="Rother K.I."/>
            <person name="Hildebrand P.W."/>
            <person name="Brogan P."/>
            <person name="Krueger E."/>
            <person name="Aksentijevich I."/>
            <person name="Goldbach-Mansky R."/>
        </authorList>
    </citation>
    <scope>ERRATUM OF PUBMED:26524591</scope>
</reference>
<reference key="33">
    <citation type="journal article" date="2015" name="Proteomics">
        <title>N-terminome analysis of the human mitochondrial proteome.</title>
        <authorList>
            <person name="Vaca Jacome A.S."/>
            <person name="Rabilloud T."/>
            <person name="Schaeffer-Reiss C."/>
            <person name="Rompais M."/>
            <person name="Ayoub D."/>
            <person name="Lane L."/>
            <person name="Bairoch A."/>
            <person name="Van Dorsselaer A."/>
            <person name="Carapito C."/>
        </authorList>
    </citation>
    <scope>IDENTIFICATION BY MASS SPECTROMETRY [LARGE SCALE ANALYSIS]</scope>
</reference>
<reference key="34">
    <citation type="journal article" date="2016" name="Biol. Chem.">
        <title>Human 20S proteasome activity towards fluorogenic peptides of various chain lengths.</title>
        <authorList>
            <person name="Rut W."/>
            <person name="Drag M."/>
        </authorList>
    </citation>
    <scope>FUNCTION</scope>
</reference>
<reference key="35">
    <citation type="journal article" date="2015" name="Nat. Commun.">
        <title>Cryo-EM reveals the conformation of a substrate analogue in the human 20S proteasome core.</title>
        <authorList>
            <person name="da Fonseca P.C."/>
            <person name="Morris E.P."/>
        </authorList>
    </citation>
    <scope>STRUCTURE BY ELECTRON MICROSCOPY (3.50 ANGSTROMS)</scope>
    <scope>SUBUNIT</scope>
</reference>
<reference key="36">
    <citation type="journal article" date="2015" name="Structure">
        <title>Crystal structure of the human 20S proteasome in complex with carfilzomib.</title>
        <authorList>
            <person name="Harshbarger W."/>
            <person name="Miller C."/>
            <person name="Diedrich C."/>
            <person name="Sacchettini J."/>
        </authorList>
    </citation>
    <scope>X-RAY CRYSTALLOGRAPHY (2.60 ANGSTROMS)</scope>
    <scope>SUBUNIT</scope>
</reference>
<reference key="37">
    <citation type="journal article" date="2016" name="Nat. Struct. Mol. Biol.">
        <title>An atomic structure of the human 26S proteasome.</title>
        <authorList>
            <person name="Huang X."/>
            <person name="Luan B."/>
            <person name="Wu J."/>
            <person name="Shi Y."/>
        </authorList>
    </citation>
    <scope>STRUCTURE BY ELECTRON MICROSCOPY (3.50 ANGSTROMS)</scope>
    <scope>SUBUNIT</scope>
</reference>
<reference key="38">
    <citation type="journal article" date="2016" name="Proc. Natl. Acad. Sci. U.S.A.">
        <title>Structure of the human 26S proteasome at a resolution of 3.9 Aa.</title>
        <authorList>
            <person name="Schweitzer A."/>
            <person name="Aufderheide A."/>
            <person name="Rudack T."/>
            <person name="Beck F."/>
            <person name="Pfeifer G."/>
            <person name="Plitzko J.M."/>
            <person name="Sakata E."/>
            <person name="Schulten K."/>
            <person name="Foerster F."/>
            <person name="Baumeister W."/>
        </authorList>
    </citation>
    <scope>STRUCTURE BY ELECTRON MICROSCOPY (4.02 ANGSTROMS)</scope>
    <scope>SUBUNIT</scope>
</reference>
<reference key="39">
    <citation type="journal article" date="2016" name="Science">
        <title>The inhibition mechanism of human 20S proteasomes enables next-generation inhibitor design.</title>
        <authorList>
            <person name="Schrader J."/>
            <person name="Henneberg F."/>
            <person name="Mata R.A."/>
            <person name="Tittmann K."/>
            <person name="Schneider T.R."/>
            <person name="Stark H."/>
            <person name="Bourenkov G."/>
            <person name="Chari A."/>
        </authorList>
    </citation>
    <scope>X-RAY CRYSTALLOGRAPHY (1.80 ANGSTROMS)</scope>
    <scope>SUBUNIT</scope>
</reference>
<reference key="40">
    <citation type="journal article" date="2021" name="Nature">
        <title>AKIRIN2 controls the nuclear import of proteasomes in vertebrates.</title>
        <authorList>
            <person name="de Almeida M."/>
            <person name="Hinterndorfer M."/>
            <person name="Brunner H."/>
            <person name="Grishkovskaya I."/>
            <person name="Singh K."/>
            <person name="Schleiffer A."/>
            <person name="Jude J."/>
            <person name="Deswal S."/>
            <person name="Kalis R."/>
            <person name="Vunjak M."/>
            <person name="Lendl T."/>
            <person name="Imre R."/>
            <person name="Roitinger E."/>
            <person name="Neumann T."/>
            <person name="Kandolf S."/>
            <person name="Schutzbier M."/>
            <person name="Mechtler K."/>
            <person name="Versteeg G.A."/>
            <person name="Haselbach D."/>
            <person name="Zuber J."/>
        </authorList>
    </citation>
    <scope>STRUCTURE BY ELECTRON MICROSCOPY (2.80 ANGSTROMS) IN COMPLEX WITH AKIRIN2</scope>
    <scope>SUBUNIT</scope>
    <scope>SUBCELLULAR LOCATION</scope>
</reference>
<name>PSB4_HUMAN</name>
<protein>
    <recommendedName>
        <fullName evidence="28">Proteasome subunit beta type-4</fullName>
    </recommendedName>
    <alternativeName>
        <fullName>26 kDa prosomal protein</fullName>
        <shortName>HsBPROS26</shortName>
        <shortName>PROS-26</shortName>
    </alternativeName>
    <alternativeName>
        <fullName>Macropain beta chain</fullName>
    </alternativeName>
    <alternativeName>
        <fullName>Multicatalytic endopeptidase complex beta chain</fullName>
    </alternativeName>
    <alternativeName>
        <fullName>Proteasome beta chain</fullName>
    </alternativeName>
    <alternativeName>
        <fullName>Proteasome chain 3</fullName>
        <shortName>HsN3</shortName>
    </alternativeName>
    <alternativeName>
        <fullName evidence="27">Proteasome subunit beta-7</fullName>
        <shortName evidence="27">beta-7</shortName>
    </alternativeName>
</protein>
<dbReference type="EMBL" id="D26600">
    <property type="protein sequence ID" value="BAA05647.1"/>
    <property type="molecule type" value="mRNA"/>
</dbReference>
<dbReference type="EMBL" id="AK313825">
    <property type="protein sequence ID" value="BAG36560.1"/>
    <property type="molecule type" value="mRNA"/>
</dbReference>
<dbReference type="EMBL" id="CR456820">
    <property type="protein sequence ID" value="CAG33101.1"/>
    <property type="molecule type" value="mRNA"/>
</dbReference>
<dbReference type="EMBL" id="BT006917">
    <property type="protein sequence ID" value="AAP35563.1"/>
    <property type="molecule type" value="mRNA"/>
</dbReference>
<dbReference type="EMBL" id="AL589764">
    <property type="status" value="NOT_ANNOTATED_CDS"/>
    <property type="molecule type" value="Genomic_DNA"/>
</dbReference>
<dbReference type="EMBL" id="CH471121">
    <property type="protein sequence ID" value="EAW53442.1"/>
    <property type="molecule type" value="Genomic_DNA"/>
</dbReference>
<dbReference type="EMBL" id="S71381">
    <property type="protein sequence ID" value="AAB31085.1"/>
    <property type="molecule type" value="mRNA"/>
</dbReference>
<dbReference type="CCDS" id="CCDS996.1"/>
<dbReference type="PIR" id="S08186">
    <property type="entry name" value="S08186"/>
</dbReference>
<dbReference type="PIR" id="S45719">
    <property type="entry name" value="S45719"/>
</dbReference>
<dbReference type="PIR" id="S50147">
    <property type="entry name" value="S50147"/>
</dbReference>
<dbReference type="RefSeq" id="NP_002787.2">
    <property type="nucleotide sequence ID" value="NM_002796.2"/>
</dbReference>
<dbReference type="PDB" id="4R3O">
    <property type="method" value="X-ray"/>
    <property type="resolution" value="2.60 A"/>
    <property type="chains" value="2/N=46-262"/>
</dbReference>
<dbReference type="PDB" id="4R67">
    <property type="method" value="X-ray"/>
    <property type="resolution" value="2.89 A"/>
    <property type="chains" value="2/N/b/p=46-262"/>
</dbReference>
<dbReference type="PDB" id="5A0Q">
    <property type="method" value="EM"/>
    <property type="resolution" value="3.50 A"/>
    <property type="chains" value="N/b=46-264"/>
</dbReference>
<dbReference type="PDB" id="5GJQ">
    <property type="method" value="EM"/>
    <property type="resolution" value="4.50 A"/>
    <property type="chains" value="g/u=1-264"/>
</dbReference>
<dbReference type="PDB" id="5GJR">
    <property type="method" value="EM"/>
    <property type="resolution" value="3.50 A"/>
    <property type="chains" value="g/u=1-264"/>
</dbReference>
<dbReference type="PDB" id="5L4G">
    <property type="method" value="EM"/>
    <property type="resolution" value="4.02 A"/>
    <property type="chains" value="4/X=1-264"/>
</dbReference>
<dbReference type="PDB" id="5LE5">
    <property type="method" value="X-ray"/>
    <property type="resolution" value="1.80 A"/>
    <property type="chains" value="M/a=46-264"/>
</dbReference>
<dbReference type="PDB" id="5LEX">
    <property type="method" value="X-ray"/>
    <property type="resolution" value="2.20 A"/>
    <property type="chains" value="M/a=46-264"/>
</dbReference>
<dbReference type="PDB" id="5LEY">
    <property type="method" value="X-ray"/>
    <property type="resolution" value="1.90 A"/>
    <property type="chains" value="M/a=46-264"/>
</dbReference>
<dbReference type="PDB" id="5LEZ">
    <property type="method" value="X-ray"/>
    <property type="resolution" value="2.19 A"/>
    <property type="chains" value="M/a=46-264"/>
</dbReference>
<dbReference type="PDB" id="5LF0">
    <property type="method" value="X-ray"/>
    <property type="resolution" value="2.41 A"/>
    <property type="chains" value="M/a=46-264"/>
</dbReference>
<dbReference type="PDB" id="5LF1">
    <property type="method" value="X-ray"/>
    <property type="resolution" value="2.00 A"/>
    <property type="chains" value="M/a=46-264"/>
</dbReference>
<dbReference type="PDB" id="5LF3">
    <property type="method" value="X-ray"/>
    <property type="resolution" value="2.10 A"/>
    <property type="chains" value="M/a=46-264"/>
</dbReference>
<dbReference type="PDB" id="5LF4">
    <property type="method" value="X-ray"/>
    <property type="resolution" value="1.99 A"/>
    <property type="chains" value="M/a=46-264"/>
</dbReference>
<dbReference type="PDB" id="5LF6">
    <property type="method" value="X-ray"/>
    <property type="resolution" value="2.07 A"/>
    <property type="chains" value="M/a=46-264"/>
</dbReference>
<dbReference type="PDB" id="5LF7">
    <property type="method" value="X-ray"/>
    <property type="resolution" value="2.00 A"/>
    <property type="chains" value="M/a=46-264"/>
</dbReference>
<dbReference type="PDB" id="5LN3">
    <property type="method" value="EM"/>
    <property type="resolution" value="6.80 A"/>
    <property type="chains" value="7=1-264"/>
</dbReference>
<dbReference type="PDB" id="5M32">
    <property type="method" value="EM"/>
    <property type="resolution" value="3.80 A"/>
    <property type="chains" value="M/a=1-264"/>
</dbReference>
<dbReference type="PDB" id="5T0C">
    <property type="method" value="EM"/>
    <property type="resolution" value="3.80 A"/>
    <property type="chains" value="AT/BT=2-264"/>
</dbReference>
<dbReference type="PDB" id="5T0G">
    <property type="method" value="EM"/>
    <property type="resolution" value="4.40 A"/>
    <property type="chains" value="T=2-264"/>
</dbReference>
<dbReference type="PDB" id="5T0H">
    <property type="method" value="EM"/>
    <property type="resolution" value="6.80 A"/>
    <property type="chains" value="T=2-264"/>
</dbReference>
<dbReference type="PDB" id="5T0I">
    <property type="method" value="EM"/>
    <property type="resolution" value="8.00 A"/>
    <property type="chains" value="T=2-264"/>
</dbReference>
<dbReference type="PDB" id="5T0J">
    <property type="method" value="EM"/>
    <property type="resolution" value="8.00 A"/>
    <property type="chains" value="T=2-264"/>
</dbReference>
<dbReference type="PDB" id="5VFO">
    <property type="method" value="EM"/>
    <property type="resolution" value="3.50 A"/>
    <property type="chains" value="T/t=46-260"/>
</dbReference>
<dbReference type="PDB" id="5VFP">
    <property type="method" value="EM"/>
    <property type="resolution" value="4.20 A"/>
    <property type="chains" value="T/t=46-260"/>
</dbReference>
<dbReference type="PDB" id="5VFQ">
    <property type="method" value="EM"/>
    <property type="resolution" value="4.20 A"/>
    <property type="chains" value="T/t=46-260"/>
</dbReference>
<dbReference type="PDB" id="5VFR">
    <property type="method" value="EM"/>
    <property type="resolution" value="4.90 A"/>
    <property type="chains" value="T/t=46-260"/>
</dbReference>
<dbReference type="PDB" id="5VFS">
    <property type="method" value="EM"/>
    <property type="resolution" value="3.60 A"/>
    <property type="chains" value="T/t=46-260"/>
</dbReference>
<dbReference type="PDB" id="5VFT">
    <property type="method" value="EM"/>
    <property type="resolution" value="7.00 A"/>
    <property type="chains" value="T/t=46-260"/>
</dbReference>
<dbReference type="PDB" id="5VFU">
    <property type="method" value="EM"/>
    <property type="resolution" value="5.80 A"/>
    <property type="chains" value="T/t=46-260"/>
</dbReference>
<dbReference type="PDB" id="6AVO">
    <property type="method" value="EM"/>
    <property type="resolution" value="3.80 A"/>
    <property type="chains" value="W/a=46-264"/>
</dbReference>
<dbReference type="PDB" id="6E5B">
    <property type="method" value="X-ray"/>
    <property type="resolution" value="2.77 A"/>
    <property type="chains" value="M/a=1-264"/>
</dbReference>
<dbReference type="PDB" id="6KWY">
    <property type="method" value="EM"/>
    <property type="resolution" value="2.72 A"/>
    <property type="chains" value="M/a=1-264"/>
</dbReference>
<dbReference type="PDB" id="6MSB">
    <property type="method" value="EM"/>
    <property type="resolution" value="3.00 A"/>
    <property type="chains" value="T/t=2-264"/>
</dbReference>
<dbReference type="PDB" id="6MSD">
    <property type="method" value="EM"/>
    <property type="resolution" value="3.20 A"/>
    <property type="chains" value="T/t=2-264"/>
</dbReference>
<dbReference type="PDB" id="6MSE">
    <property type="method" value="EM"/>
    <property type="resolution" value="3.30 A"/>
    <property type="chains" value="B=108-158"/>
</dbReference>
<dbReference type="PDB" id="6MSG">
    <property type="method" value="EM"/>
    <property type="resolution" value="3.50 A"/>
    <property type="chains" value="T/t=2-264"/>
</dbReference>
<dbReference type="PDB" id="6MSH">
    <property type="method" value="EM"/>
    <property type="resolution" value="3.60 A"/>
    <property type="chains" value="T/t=2-264"/>
</dbReference>
<dbReference type="PDB" id="6MSJ">
    <property type="method" value="EM"/>
    <property type="resolution" value="3.30 A"/>
    <property type="chains" value="T/t=2-264"/>
</dbReference>
<dbReference type="PDB" id="6MSK">
    <property type="method" value="EM"/>
    <property type="resolution" value="3.20 A"/>
    <property type="chains" value="T/t=2-264"/>
</dbReference>
<dbReference type="PDB" id="6R70">
    <property type="method" value="EM"/>
    <property type="resolution" value="3.50 A"/>
    <property type="chains" value="M/a=46-261"/>
</dbReference>
<dbReference type="PDB" id="6REY">
    <property type="method" value="EM"/>
    <property type="resolution" value="3.00 A"/>
    <property type="chains" value="N/b=46-264"/>
</dbReference>
<dbReference type="PDB" id="6RGQ">
    <property type="method" value="EM"/>
    <property type="resolution" value="2.60 A"/>
    <property type="chains" value="N/b=46-264"/>
</dbReference>
<dbReference type="PDB" id="6WJD">
    <property type="method" value="EM"/>
    <property type="resolution" value="4.80 A"/>
    <property type="chains" value="T/t=2-264"/>
</dbReference>
<dbReference type="PDB" id="6WJN">
    <property type="method" value="EM"/>
    <property type="resolution" value="5.70 A"/>
    <property type="chains" value="T/t=46-260"/>
</dbReference>
<dbReference type="PDB" id="6XMJ">
    <property type="method" value="EM"/>
    <property type="resolution" value="3.00 A"/>
    <property type="chains" value="N=46-262"/>
</dbReference>
<dbReference type="PDB" id="7AWE">
    <property type="method" value="X-ray"/>
    <property type="resolution" value="2.29 A"/>
    <property type="chains" value="N/b=46-259"/>
</dbReference>
<dbReference type="PDB" id="7B12">
    <property type="method" value="X-ray"/>
    <property type="resolution" value="2.43 A"/>
    <property type="chains" value="2/N=46-259"/>
</dbReference>
<dbReference type="PDB" id="7LXV">
    <property type="method" value="EM"/>
    <property type="resolution" value="3.40 A"/>
    <property type="chains" value="M/a=46-264"/>
</dbReference>
<dbReference type="PDB" id="7NAN">
    <property type="method" value="EM"/>
    <property type="resolution" value="2.80 A"/>
    <property type="chains" value="M/a=1-264"/>
</dbReference>
<dbReference type="PDB" id="7NAO">
    <property type="method" value="EM"/>
    <property type="resolution" value="2.90 A"/>
    <property type="chains" value="M/a=1-264"/>
</dbReference>
<dbReference type="PDB" id="7NAP">
    <property type="method" value="EM"/>
    <property type="resolution" value="3.20 A"/>
    <property type="chains" value="M/a=1-264"/>
</dbReference>
<dbReference type="PDB" id="7NAQ">
    <property type="method" value="EM"/>
    <property type="resolution" value="3.20 A"/>
    <property type="chains" value="M/a=1-264"/>
</dbReference>
<dbReference type="PDB" id="7NHT">
    <property type="method" value="EM"/>
    <property type="resolution" value="2.80 A"/>
    <property type="chains" value="M=1-264"/>
</dbReference>
<dbReference type="PDB" id="7PG9">
    <property type="method" value="EM"/>
    <property type="resolution" value="3.70 A"/>
    <property type="chains" value="N/b=46-264"/>
</dbReference>
<dbReference type="PDB" id="7QXN">
    <property type="method" value="EM"/>
    <property type="resolution" value="3.70 A"/>
    <property type="chains" value="T/t=2-264"/>
</dbReference>
<dbReference type="PDB" id="7QXP">
    <property type="method" value="EM"/>
    <property type="resolution" value="3.60 A"/>
    <property type="chains" value="T/t=2-264"/>
</dbReference>
<dbReference type="PDB" id="7QXU">
    <property type="method" value="EM"/>
    <property type="resolution" value="4.30 A"/>
    <property type="chains" value="T/t=2-264"/>
</dbReference>
<dbReference type="PDB" id="7QXW">
    <property type="method" value="EM"/>
    <property type="resolution" value="4.10 A"/>
    <property type="chains" value="T/t=2-264"/>
</dbReference>
<dbReference type="PDB" id="7QXX">
    <property type="method" value="EM"/>
    <property type="resolution" value="4.40 A"/>
    <property type="chains" value="T/t=2-264"/>
</dbReference>
<dbReference type="PDB" id="7QY7">
    <property type="method" value="EM"/>
    <property type="resolution" value="4.70 A"/>
    <property type="chains" value="T/t=2-264"/>
</dbReference>
<dbReference type="PDB" id="7QYA">
    <property type="method" value="EM"/>
    <property type="resolution" value="4.80 A"/>
    <property type="chains" value="T/t=2-264"/>
</dbReference>
<dbReference type="PDB" id="7QYB">
    <property type="method" value="EM"/>
    <property type="resolution" value="4.10 A"/>
    <property type="chains" value="T/t=2-264"/>
</dbReference>
<dbReference type="PDB" id="7V5G">
    <property type="method" value="EM"/>
    <property type="resolution" value="4.47 A"/>
    <property type="chains" value="G/N=46-264"/>
</dbReference>
<dbReference type="PDB" id="7V5M">
    <property type="method" value="EM"/>
    <property type="resolution" value="3.88 A"/>
    <property type="chains" value="N/b=46-264"/>
</dbReference>
<dbReference type="PDB" id="7W37">
    <property type="method" value="EM"/>
    <property type="resolution" value="3.00 A"/>
    <property type="chains" value="T/t=1-264"/>
</dbReference>
<dbReference type="PDB" id="7W38">
    <property type="method" value="EM"/>
    <property type="resolution" value="3.10 A"/>
    <property type="chains" value="T/t=1-264"/>
</dbReference>
<dbReference type="PDB" id="7W39">
    <property type="method" value="EM"/>
    <property type="resolution" value="3.20 A"/>
    <property type="chains" value="T/t=1-264"/>
</dbReference>
<dbReference type="PDB" id="7W3A">
    <property type="method" value="EM"/>
    <property type="resolution" value="3.50 A"/>
    <property type="chains" value="T/t=1-264"/>
</dbReference>
<dbReference type="PDB" id="7W3B">
    <property type="method" value="EM"/>
    <property type="resolution" value="3.60 A"/>
    <property type="chains" value="T/t=1-264"/>
</dbReference>
<dbReference type="PDB" id="7W3C">
    <property type="method" value="EM"/>
    <property type="resolution" value="3.40 A"/>
    <property type="chains" value="T/t=1-264"/>
</dbReference>
<dbReference type="PDB" id="7W3F">
    <property type="method" value="EM"/>
    <property type="resolution" value="3.30 A"/>
    <property type="chains" value="T/t=1-264"/>
</dbReference>
<dbReference type="PDB" id="7W3G">
    <property type="method" value="EM"/>
    <property type="resolution" value="3.20 A"/>
    <property type="chains" value="T/t=1-264"/>
</dbReference>
<dbReference type="PDB" id="7W3H">
    <property type="method" value="EM"/>
    <property type="resolution" value="3.20 A"/>
    <property type="chains" value="T/t=1-264"/>
</dbReference>
<dbReference type="PDB" id="7W3I">
    <property type="method" value="EM"/>
    <property type="resolution" value="3.50 A"/>
    <property type="chains" value="T/t=1-264"/>
</dbReference>
<dbReference type="PDB" id="7W3J">
    <property type="method" value="EM"/>
    <property type="resolution" value="3.50 A"/>
    <property type="chains" value="T/t=1-264"/>
</dbReference>
<dbReference type="PDB" id="7W3K">
    <property type="method" value="EM"/>
    <property type="resolution" value="3.60 A"/>
    <property type="chains" value="T/t=1-264"/>
</dbReference>
<dbReference type="PDB" id="7W3M">
    <property type="method" value="EM"/>
    <property type="resolution" value="3.50 A"/>
    <property type="chains" value="T/t=1-264"/>
</dbReference>
<dbReference type="PDB" id="8BZL">
    <property type="method" value="X-ray"/>
    <property type="resolution" value="2.14 A"/>
    <property type="chains" value="M/a=1-264"/>
</dbReference>
<dbReference type="PDB" id="8CVR">
    <property type="method" value="EM"/>
    <property type="resolution" value="2.70 A"/>
    <property type="chains" value="N/b=1-264"/>
</dbReference>
<dbReference type="PDB" id="8CVS">
    <property type="method" value="EM"/>
    <property type="resolution" value="3.10 A"/>
    <property type="chains" value="M/a=1-264"/>
</dbReference>
<dbReference type="PDB" id="8CVT">
    <property type="method" value="EM"/>
    <property type="resolution" value="3.00 A"/>
    <property type="chains" value="T/t=1-264"/>
</dbReference>
<dbReference type="PDB" id="8CXB">
    <property type="method" value="EM"/>
    <property type="resolution" value="2.90 A"/>
    <property type="chains" value="M/a=1-264"/>
</dbReference>
<dbReference type="PDB" id="8QYN">
    <property type="method" value="EM"/>
    <property type="resolution" value="2.88 A"/>
    <property type="chains" value="P=1-264"/>
</dbReference>
<dbReference type="PDB" id="8QYO">
    <property type="method" value="EM"/>
    <property type="resolution" value="2.84 A"/>
    <property type="chains" value="M/a=1-264"/>
</dbReference>
<dbReference type="PDB" id="8QYS">
    <property type="method" value="EM"/>
    <property type="resolution" value="3.89 A"/>
    <property type="chains" value="P/g=50-257"/>
</dbReference>
<dbReference type="PDB" id="8TM6">
    <property type="method" value="EM"/>
    <property type="resolution" value="2.80 A"/>
    <property type="chains" value="M/a=1-264"/>
</dbReference>
<dbReference type="PDB" id="8UD9">
    <property type="method" value="EM"/>
    <property type="resolution" value="2.04 A"/>
    <property type="chains" value="N/b=46-264"/>
</dbReference>
<dbReference type="PDB" id="8YIX">
    <property type="method" value="EM"/>
    <property type="resolution" value="2.91 A"/>
    <property type="chains" value="M=1-253"/>
</dbReference>
<dbReference type="PDB" id="8YIY">
    <property type="method" value="EM"/>
    <property type="resolution" value="3.41 A"/>
    <property type="chains" value="M/a=1-253"/>
</dbReference>
<dbReference type="PDB" id="8YIZ">
    <property type="method" value="EM"/>
    <property type="resolution" value="3.79 A"/>
    <property type="chains" value="M/a=1-253"/>
</dbReference>
<dbReference type="PDB" id="9E8G">
    <property type="method" value="EM"/>
    <property type="resolution" value="3.01 A"/>
    <property type="chains" value="h=1-264"/>
</dbReference>
<dbReference type="PDB" id="9E8O">
    <property type="method" value="EM"/>
    <property type="resolution" value="3.10 A"/>
    <property type="chains" value="T=1-264"/>
</dbReference>
<dbReference type="PDB" id="9E8Q">
    <property type="method" value="EM"/>
    <property type="resolution" value="3.16 A"/>
    <property type="chains" value="T=1-264"/>
</dbReference>
<dbReference type="PDB" id="9HMN">
    <property type="method" value="EM"/>
    <property type="resolution" value="2.55 A"/>
    <property type="chains" value="N/X=46-264"/>
</dbReference>
<dbReference type="PDBsum" id="4R3O"/>
<dbReference type="PDBsum" id="4R67"/>
<dbReference type="PDBsum" id="5A0Q"/>
<dbReference type="PDBsum" id="5GJQ"/>
<dbReference type="PDBsum" id="5GJR"/>
<dbReference type="PDBsum" id="5L4G"/>
<dbReference type="PDBsum" id="5LE5"/>
<dbReference type="PDBsum" id="5LEX"/>
<dbReference type="PDBsum" id="5LEY"/>
<dbReference type="PDBsum" id="5LEZ"/>
<dbReference type="PDBsum" id="5LF0"/>
<dbReference type="PDBsum" id="5LF1"/>
<dbReference type="PDBsum" id="5LF3"/>
<dbReference type="PDBsum" id="5LF4"/>
<dbReference type="PDBsum" id="5LF6"/>
<dbReference type="PDBsum" id="5LF7"/>
<dbReference type="PDBsum" id="5LN3"/>
<dbReference type="PDBsum" id="5M32"/>
<dbReference type="PDBsum" id="5T0C"/>
<dbReference type="PDBsum" id="5T0G"/>
<dbReference type="PDBsum" id="5T0H"/>
<dbReference type="PDBsum" id="5T0I"/>
<dbReference type="PDBsum" id="5T0J"/>
<dbReference type="PDBsum" id="5VFO"/>
<dbReference type="PDBsum" id="5VFP"/>
<dbReference type="PDBsum" id="5VFQ"/>
<dbReference type="PDBsum" id="5VFR"/>
<dbReference type="PDBsum" id="5VFS"/>
<dbReference type="PDBsum" id="5VFT"/>
<dbReference type="PDBsum" id="5VFU"/>
<dbReference type="PDBsum" id="6AVO"/>
<dbReference type="PDBsum" id="6E5B"/>
<dbReference type="PDBsum" id="6KWY"/>
<dbReference type="PDBsum" id="6MSB"/>
<dbReference type="PDBsum" id="6MSD"/>
<dbReference type="PDBsum" id="6MSE"/>
<dbReference type="PDBsum" id="6MSG"/>
<dbReference type="PDBsum" id="6MSH"/>
<dbReference type="PDBsum" id="6MSJ"/>
<dbReference type="PDBsum" id="6MSK"/>
<dbReference type="PDBsum" id="6R70"/>
<dbReference type="PDBsum" id="6REY"/>
<dbReference type="PDBsum" id="6RGQ"/>
<dbReference type="PDBsum" id="6WJD"/>
<dbReference type="PDBsum" id="6WJN"/>
<dbReference type="PDBsum" id="6XMJ"/>
<dbReference type="PDBsum" id="7AWE"/>
<dbReference type="PDBsum" id="7B12"/>
<dbReference type="PDBsum" id="7LXV"/>
<dbReference type="PDBsum" id="7NAN"/>
<dbReference type="PDBsum" id="7NAO"/>
<dbReference type="PDBsum" id="7NAP"/>
<dbReference type="PDBsum" id="7NAQ"/>
<dbReference type="PDBsum" id="7NHT"/>
<dbReference type="PDBsum" id="7PG9"/>
<dbReference type="PDBsum" id="7QXN"/>
<dbReference type="PDBsum" id="7QXP"/>
<dbReference type="PDBsum" id="7QXU"/>
<dbReference type="PDBsum" id="7QXW"/>
<dbReference type="PDBsum" id="7QXX"/>
<dbReference type="PDBsum" id="7QY7"/>
<dbReference type="PDBsum" id="7QYA"/>
<dbReference type="PDBsum" id="7QYB"/>
<dbReference type="PDBsum" id="7V5G"/>
<dbReference type="PDBsum" id="7V5M"/>
<dbReference type="PDBsum" id="7W37"/>
<dbReference type="PDBsum" id="7W38"/>
<dbReference type="PDBsum" id="7W39"/>
<dbReference type="PDBsum" id="7W3A"/>
<dbReference type="PDBsum" id="7W3B"/>
<dbReference type="PDBsum" id="7W3C"/>
<dbReference type="PDBsum" id="7W3F"/>
<dbReference type="PDBsum" id="7W3G"/>
<dbReference type="PDBsum" id="7W3H"/>
<dbReference type="PDBsum" id="7W3I"/>
<dbReference type="PDBsum" id="7W3J"/>
<dbReference type="PDBsum" id="7W3K"/>
<dbReference type="PDBsum" id="7W3M"/>
<dbReference type="PDBsum" id="8BZL"/>
<dbReference type="PDBsum" id="8CVR"/>
<dbReference type="PDBsum" id="8CVS"/>
<dbReference type="PDBsum" id="8CVT"/>
<dbReference type="PDBsum" id="8CXB"/>
<dbReference type="PDBsum" id="8QYN"/>
<dbReference type="PDBsum" id="8QYO"/>
<dbReference type="PDBsum" id="8QYS"/>
<dbReference type="PDBsum" id="8TM6"/>
<dbReference type="PDBsum" id="8UD9"/>
<dbReference type="PDBsum" id="8YIX"/>
<dbReference type="PDBsum" id="8YIY"/>
<dbReference type="PDBsum" id="8YIZ"/>
<dbReference type="PDBsum" id="9E8G"/>
<dbReference type="PDBsum" id="9E8O"/>
<dbReference type="PDBsum" id="9E8Q"/>
<dbReference type="PDBsum" id="9HMN"/>
<dbReference type="EMDB" id="EMD-0781"/>
<dbReference type="EMDB" id="EMD-12341"/>
<dbReference type="EMDB" id="EMD-13389"/>
<dbReference type="EMDB" id="EMD-14201"/>
<dbReference type="EMDB" id="EMD-14202"/>
<dbReference type="EMDB" id="EMD-14203"/>
<dbReference type="EMDB" id="EMD-14204"/>
<dbReference type="EMDB" id="EMD-14205"/>
<dbReference type="EMDB" id="EMD-14209"/>
<dbReference type="EMDB" id="EMD-14210"/>
<dbReference type="EMDB" id="EMD-14211"/>
<dbReference type="EMDB" id="EMD-18759"/>
<dbReference type="EMDB" id="EMD-18760"/>
<dbReference type="EMDB" id="EMD-18761"/>
<dbReference type="EMDB" id="EMD-21691"/>
<dbReference type="EMDB" id="EMD-21696"/>
<dbReference type="EMDB" id="EMD-22259"/>
<dbReference type="EMDB" id="EMD-23576"/>
<dbReference type="EMDB" id="EMD-24275"/>
<dbReference type="EMDB" id="EMD-24276"/>
<dbReference type="EMDB" id="EMD-24277"/>
<dbReference type="EMDB" id="EMD-24278"/>
<dbReference type="EMDB" id="EMD-27013"/>
<dbReference type="EMDB" id="EMD-27015"/>
<dbReference type="EMDB" id="EMD-27018"/>
<dbReference type="EMDB" id="EMD-2981"/>
<dbReference type="EMDB" id="EMD-31724"/>
<dbReference type="EMDB" id="EMD-31727"/>
<dbReference type="EMDB" id="EMD-32272"/>
<dbReference type="EMDB" id="EMD-32273"/>
<dbReference type="EMDB" id="EMD-32274"/>
<dbReference type="EMDB" id="EMD-32275"/>
<dbReference type="EMDB" id="EMD-32276"/>
<dbReference type="EMDB" id="EMD-32277"/>
<dbReference type="EMDB" id="EMD-32278"/>
<dbReference type="EMDB" id="EMD-32279"/>
<dbReference type="EMDB" id="EMD-32280"/>
<dbReference type="EMDB" id="EMD-32281"/>
<dbReference type="EMDB" id="EMD-32282"/>
<dbReference type="EMDB" id="EMD-32283"/>
<dbReference type="EMDB" id="EMD-32284"/>
<dbReference type="EMDB" id="EMD-39332"/>
<dbReference type="EMDB" id="EMD-39333"/>
<dbReference type="EMDB" id="EMD-39334"/>
<dbReference type="EMDB" id="EMD-4089"/>
<dbReference type="EMDB" id="EMD-41380"/>
<dbReference type="EMDB" id="EMD-4146"/>
<dbReference type="EMDB" id="EMD-42148"/>
<dbReference type="EMDB" id="EMD-4738"/>
<dbReference type="EMDB" id="EMD-47719"/>
<dbReference type="EMDB" id="EMD-47726"/>
<dbReference type="EMDB" id="EMD-47727"/>
<dbReference type="EMDB" id="EMD-4860"/>
<dbReference type="EMDB" id="EMD-4877"/>
<dbReference type="EMDB" id="EMD-52296"/>
<dbReference type="EMDB" id="EMD-60138"/>
<dbReference type="EMDB" id="EMD-60139"/>
<dbReference type="EMDB" id="EMD-7010"/>
<dbReference type="EMDB" id="EMD-8662"/>
<dbReference type="EMDB" id="EMD-8663"/>
<dbReference type="EMDB" id="EMD-8664"/>
<dbReference type="EMDB" id="EMD-8665"/>
<dbReference type="EMDB" id="EMD-8666"/>
<dbReference type="EMDB" id="EMD-8667"/>
<dbReference type="EMDB" id="EMD-8668"/>
<dbReference type="EMDB" id="EMD-9216"/>
<dbReference type="EMDB" id="EMD-9217"/>
<dbReference type="EMDB" id="EMD-9218"/>
<dbReference type="EMDB" id="EMD-9219"/>
<dbReference type="EMDB" id="EMD-9220"/>
<dbReference type="EMDB" id="EMD-9221"/>
<dbReference type="EMDB" id="EMD-9222"/>
<dbReference type="EMDB" id="EMD-9511"/>
<dbReference type="EMDB" id="EMD-9512"/>
<dbReference type="SMR" id="P28070"/>
<dbReference type="BioGRID" id="111665">
    <property type="interactions" value="229"/>
</dbReference>
<dbReference type="ComplexPortal" id="CPX-5993">
    <property type="entry name" value="26S proteasome complex"/>
</dbReference>
<dbReference type="ComplexPortal" id="CPX-8806">
    <property type="entry name" value="20S proteasome complex"/>
</dbReference>
<dbReference type="ComplexPortal" id="CPX-8841">
    <property type="entry name" value="PA200-20S single-capped proteasome"/>
</dbReference>
<dbReference type="ComplexPortal" id="CPX-8842">
    <property type="entry name" value="PA28-alphabeta double-capped 20S proteasome complex"/>
</dbReference>
<dbReference type="ComplexPortal" id="CPX-9001">
    <property type="entry name" value="PA28-gamma single-capped 20S proteasome complex"/>
</dbReference>
<dbReference type="ComplexPortal" id="CPX-9002">
    <property type="entry name" value="PA28-alphabeta single-capped 20S proteasome complex"/>
</dbReference>
<dbReference type="ComplexPortal" id="CPX-9003">
    <property type="entry name" value="20S immunoproteasome complex"/>
</dbReference>
<dbReference type="ComplexPortal" id="CPX-9004">
    <property type="entry name" value="20S thymoproteasome complex"/>
</dbReference>
<dbReference type="ComplexPortal" id="CPX-9021">
    <property type="entry name" value="20S spermatoproteasome complex"/>
</dbReference>
<dbReference type="ComplexPortal" id="CPX-9022">
    <property type="entry name" value="PA28-gamma double-capped 20S proteasome complex"/>
</dbReference>
<dbReference type="ComplexPortal" id="CPX-9063">
    <property type="entry name" value="PA200-20S-PA200 double-capped proteasome complex"/>
</dbReference>
<dbReference type="ComplexPortal" id="CPX-9082">
    <property type="entry name" value="19S-20S-PA28-alphabeta hybrid proteasome complex"/>
</dbReference>
<dbReference type="ComplexPortal" id="CPX-9085">
    <property type="entry name" value="19S-20S-PA28-gamma hybrid proteasome complex"/>
</dbReference>
<dbReference type="ComplexPortal" id="CPX-9086">
    <property type="entry name" value="30S proteasome complex"/>
</dbReference>
<dbReference type="CORUM" id="P28070"/>
<dbReference type="DIP" id="DIP-33844N"/>
<dbReference type="FunCoup" id="P28070">
    <property type="interactions" value="2761"/>
</dbReference>
<dbReference type="IntAct" id="P28070">
    <property type="interactions" value="127"/>
</dbReference>
<dbReference type="MINT" id="P28070"/>
<dbReference type="STRING" id="9606.ENSP00000290541"/>
<dbReference type="BindingDB" id="P28070"/>
<dbReference type="ChEMBL" id="CHEMBL4879435"/>
<dbReference type="DrugBank" id="DB08515">
    <property type="generic name" value="(3AR,6R,6AS)-6-((S)-((S)-CYCLOHEX-2-ENYL)(HYDROXY)METHYL)-6A-METHYL-4-OXO-HEXAHYDRO-2H-FURO[3,2-C]PYRROLE-6-CARBALDEHYDE"/>
</dbReference>
<dbReference type="MEROPS" id="T01.987"/>
<dbReference type="GlyGen" id="P28070">
    <property type="glycosylation" value="2 sites, 1 N-linked glycan (1 site), 1 O-linked glycan (1 site)"/>
</dbReference>
<dbReference type="iPTMnet" id="P28070"/>
<dbReference type="MetOSite" id="P28070"/>
<dbReference type="PhosphoSitePlus" id="P28070"/>
<dbReference type="BioMuta" id="PSMB4"/>
<dbReference type="DMDM" id="116242733"/>
<dbReference type="OGP" id="P28070"/>
<dbReference type="REPRODUCTION-2DPAGE" id="IPI00555956"/>
<dbReference type="jPOST" id="P28070"/>
<dbReference type="MassIVE" id="P28070"/>
<dbReference type="PaxDb" id="9606-ENSP00000290541"/>
<dbReference type="PeptideAtlas" id="P28070"/>
<dbReference type="PRIDE" id="P28070"/>
<dbReference type="ProteomicsDB" id="54446"/>
<dbReference type="Pumba" id="P28070"/>
<dbReference type="TopDownProteomics" id="P28070"/>
<dbReference type="Antibodypedia" id="1673">
    <property type="antibodies" value="465 antibodies from 34 providers"/>
</dbReference>
<dbReference type="DNASU" id="5692"/>
<dbReference type="Ensembl" id="ENST00000290541.7">
    <property type="protein sequence ID" value="ENSP00000290541.6"/>
    <property type="gene ID" value="ENSG00000159377.11"/>
</dbReference>
<dbReference type="GeneID" id="5692"/>
<dbReference type="KEGG" id="hsa:5692"/>
<dbReference type="MANE-Select" id="ENST00000290541.7">
    <property type="protein sequence ID" value="ENSP00000290541.6"/>
    <property type="RefSeq nucleotide sequence ID" value="NM_002796.3"/>
    <property type="RefSeq protein sequence ID" value="NP_002787.2"/>
</dbReference>
<dbReference type="UCSC" id="uc001eyc.2">
    <property type="organism name" value="human"/>
</dbReference>
<dbReference type="AGR" id="HGNC:9541"/>
<dbReference type="CTD" id="5692"/>
<dbReference type="DisGeNET" id="5692"/>
<dbReference type="GeneCards" id="PSMB4"/>
<dbReference type="HGNC" id="HGNC:9541">
    <property type="gene designation" value="PSMB4"/>
</dbReference>
<dbReference type="HPA" id="ENSG00000159377">
    <property type="expression patterns" value="Low tissue specificity"/>
</dbReference>
<dbReference type="MalaCards" id="PSMB4"/>
<dbReference type="MIM" id="602177">
    <property type="type" value="gene"/>
</dbReference>
<dbReference type="MIM" id="617591">
    <property type="type" value="phenotype"/>
</dbReference>
<dbReference type="neXtProt" id="NX_P28070"/>
<dbReference type="OpenTargets" id="ENSG00000159377"/>
<dbReference type="PharmGKB" id="PA33886"/>
<dbReference type="VEuPathDB" id="HostDB:ENSG00000159377"/>
<dbReference type="eggNOG" id="KOG0185">
    <property type="taxonomic scope" value="Eukaryota"/>
</dbReference>
<dbReference type="GeneTree" id="ENSGT00390000000698"/>
<dbReference type="HOGENOM" id="CLU_072435_2_0_1"/>
<dbReference type="InParanoid" id="P28070"/>
<dbReference type="OMA" id="QPIMRRY"/>
<dbReference type="OrthoDB" id="7854943at2759"/>
<dbReference type="PAN-GO" id="P28070">
    <property type="GO annotations" value="4 GO annotations based on evolutionary models"/>
</dbReference>
<dbReference type="PhylomeDB" id="P28070"/>
<dbReference type="TreeFam" id="TF106220"/>
<dbReference type="PathwayCommons" id="P28070"/>
<dbReference type="Reactome" id="R-HSA-1169091">
    <property type="pathway name" value="Activation of NF-kappaB in B cells"/>
</dbReference>
<dbReference type="Reactome" id="R-HSA-1234176">
    <property type="pathway name" value="Oxygen-dependent proline hydroxylation of Hypoxia-inducible Factor Alpha"/>
</dbReference>
<dbReference type="Reactome" id="R-HSA-1236974">
    <property type="pathway name" value="ER-Phagosome pathway"/>
</dbReference>
<dbReference type="Reactome" id="R-HSA-1236978">
    <property type="pathway name" value="Cross-presentation of soluble exogenous antigens (endosomes)"/>
</dbReference>
<dbReference type="Reactome" id="R-HSA-174084">
    <property type="pathway name" value="Autodegradation of Cdh1 by Cdh1:APC/C"/>
</dbReference>
<dbReference type="Reactome" id="R-HSA-174113">
    <property type="pathway name" value="SCF-beta-TrCP mediated degradation of Emi1"/>
</dbReference>
<dbReference type="Reactome" id="R-HSA-174154">
    <property type="pathway name" value="APC/C:Cdc20 mediated degradation of Securin"/>
</dbReference>
<dbReference type="Reactome" id="R-HSA-174178">
    <property type="pathway name" value="APC/C:Cdh1 mediated degradation of Cdc20 and other APC/C:Cdh1 targeted proteins in late mitosis/early G1"/>
</dbReference>
<dbReference type="Reactome" id="R-HSA-174184">
    <property type="pathway name" value="Cdc20:Phospho-APC/C mediated degradation of Cyclin A"/>
</dbReference>
<dbReference type="Reactome" id="R-HSA-180534">
    <property type="pathway name" value="Vpu mediated degradation of CD4"/>
</dbReference>
<dbReference type="Reactome" id="R-HSA-180585">
    <property type="pathway name" value="Vif-mediated degradation of APOBEC3G"/>
</dbReference>
<dbReference type="Reactome" id="R-HSA-187577">
    <property type="pathway name" value="SCF(Skp2)-mediated degradation of p27/p21"/>
</dbReference>
<dbReference type="Reactome" id="R-HSA-195253">
    <property type="pathway name" value="Degradation of beta-catenin by the destruction complex"/>
</dbReference>
<dbReference type="Reactome" id="R-HSA-202424">
    <property type="pathway name" value="Downstream TCR signaling"/>
</dbReference>
<dbReference type="Reactome" id="R-HSA-211733">
    <property type="pathway name" value="Regulation of activated PAK-2p34 by proteasome mediated degradation"/>
</dbReference>
<dbReference type="Reactome" id="R-HSA-2467813">
    <property type="pathway name" value="Separation of Sister Chromatids"/>
</dbReference>
<dbReference type="Reactome" id="R-HSA-2871837">
    <property type="pathway name" value="FCERI mediated NF-kB activation"/>
</dbReference>
<dbReference type="Reactome" id="R-HSA-349425">
    <property type="pathway name" value="Autodegradation of the E3 ubiquitin ligase COP1"/>
</dbReference>
<dbReference type="Reactome" id="R-HSA-350562">
    <property type="pathway name" value="Regulation of ornithine decarboxylase (ODC)"/>
</dbReference>
<dbReference type="Reactome" id="R-HSA-382556">
    <property type="pathway name" value="ABC-family proteins mediated transport"/>
</dbReference>
<dbReference type="Reactome" id="R-HSA-450408">
    <property type="pathway name" value="AUF1 (hnRNP D0) binds and destabilizes mRNA"/>
</dbReference>
<dbReference type="Reactome" id="R-HSA-4608870">
    <property type="pathway name" value="Asymmetric localization of PCP proteins"/>
</dbReference>
<dbReference type="Reactome" id="R-HSA-4641257">
    <property type="pathway name" value="Degradation of AXIN"/>
</dbReference>
<dbReference type="Reactome" id="R-HSA-4641258">
    <property type="pathway name" value="Degradation of DVL"/>
</dbReference>
<dbReference type="Reactome" id="R-HSA-5358346">
    <property type="pathway name" value="Hedgehog ligand biogenesis"/>
</dbReference>
<dbReference type="Reactome" id="R-HSA-5362768">
    <property type="pathway name" value="Hh mutants are degraded by ERAD"/>
</dbReference>
<dbReference type="Reactome" id="R-HSA-5607761">
    <property type="pathway name" value="Dectin-1 mediated noncanonical NF-kB signaling"/>
</dbReference>
<dbReference type="Reactome" id="R-HSA-5607764">
    <property type="pathway name" value="CLEC7A (Dectin-1) signaling"/>
</dbReference>
<dbReference type="Reactome" id="R-HSA-5610780">
    <property type="pathway name" value="Degradation of GLI1 by the proteasome"/>
</dbReference>
<dbReference type="Reactome" id="R-HSA-5610783">
    <property type="pathway name" value="Degradation of GLI2 by the proteasome"/>
</dbReference>
<dbReference type="Reactome" id="R-HSA-5610785">
    <property type="pathway name" value="GLI3 is processed to GLI3R by the proteasome"/>
</dbReference>
<dbReference type="Reactome" id="R-HSA-5632684">
    <property type="pathway name" value="Hedgehog 'on' state"/>
</dbReference>
<dbReference type="Reactome" id="R-HSA-5658442">
    <property type="pathway name" value="Regulation of RAS by GAPs"/>
</dbReference>
<dbReference type="Reactome" id="R-HSA-5668541">
    <property type="pathway name" value="TNFR2 non-canonical NF-kB pathway"/>
</dbReference>
<dbReference type="Reactome" id="R-HSA-5676590">
    <property type="pathway name" value="NIK--&gt;noncanonical NF-kB signaling"/>
</dbReference>
<dbReference type="Reactome" id="R-HSA-5678895">
    <property type="pathway name" value="Defective CFTR causes cystic fibrosis"/>
</dbReference>
<dbReference type="Reactome" id="R-HSA-5687128">
    <property type="pathway name" value="MAPK6/MAPK4 signaling"/>
</dbReference>
<dbReference type="Reactome" id="R-HSA-5689603">
    <property type="pathway name" value="UCH proteinases"/>
</dbReference>
<dbReference type="Reactome" id="R-HSA-5689880">
    <property type="pathway name" value="Ub-specific processing proteases"/>
</dbReference>
<dbReference type="Reactome" id="R-HSA-68867">
    <property type="pathway name" value="Assembly of the pre-replicative complex"/>
</dbReference>
<dbReference type="Reactome" id="R-HSA-68949">
    <property type="pathway name" value="Orc1 removal from chromatin"/>
</dbReference>
<dbReference type="Reactome" id="R-HSA-69017">
    <property type="pathway name" value="CDK-mediated phosphorylation and removal of Cdc6"/>
</dbReference>
<dbReference type="Reactome" id="R-HSA-69481">
    <property type="pathway name" value="G2/M Checkpoints"/>
</dbReference>
<dbReference type="Reactome" id="R-HSA-69601">
    <property type="pathway name" value="Ubiquitin Mediated Degradation of Phosphorylated Cdc25A"/>
</dbReference>
<dbReference type="Reactome" id="R-HSA-75815">
    <property type="pathway name" value="Ubiquitin-dependent degradation of Cyclin D"/>
</dbReference>
<dbReference type="Reactome" id="R-HSA-8852276">
    <property type="pathway name" value="The role of GTSE1 in G2/M progression after G2 checkpoint"/>
</dbReference>
<dbReference type="Reactome" id="R-HSA-8854050">
    <property type="pathway name" value="FBXL7 down-regulates AURKA during mitotic entry and in early mitosis"/>
</dbReference>
<dbReference type="Reactome" id="R-HSA-8939236">
    <property type="pathway name" value="RUNX1 regulates transcription of genes involved in differentiation of HSCs"/>
</dbReference>
<dbReference type="Reactome" id="R-HSA-8939902">
    <property type="pathway name" value="Regulation of RUNX2 expression and activity"/>
</dbReference>
<dbReference type="Reactome" id="R-HSA-8941858">
    <property type="pathway name" value="Regulation of RUNX3 expression and activity"/>
</dbReference>
<dbReference type="Reactome" id="R-HSA-8948751">
    <property type="pathway name" value="Regulation of PTEN stability and activity"/>
</dbReference>
<dbReference type="Reactome" id="R-HSA-8951664">
    <property type="pathway name" value="Neddylation"/>
</dbReference>
<dbReference type="Reactome" id="R-HSA-9010553">
    <property type="pathway name" value="Regulation of expression of SLITs and ROBOs"/>
</dbReference>
<dbReference type="Reactome" id="R-HSA-9020702">
    <property type="pathway name" value="Interleukin-1 signaling"/>
</dbReference>
<dbReference type="Reactome" id="R-HSA-9604323">
    <property type="pathway name" value="Negative regulation of NOTCH4 signaling"/>
</dbReference>
<dbReference type="Reactome" id="R-HSA-9755511">
    <property type="pathway name" value="KEAP1-NFE2L2 pathway"/>
</dbReference>
<dbReference type="Reactome" id="R-HSA-9762114">
    <property type="pathway name" value="GSK3B and BTRC:CUL1-mediated-degradation of NFE2L2"/>
</dbReference>
<dbReference type="Reactome" id="R-HSA-9824272">
    <property type="pathway name" value="Somitogenesis"/>
</dbReference>
<dbReference type="Reactome" id="R-HSA-983168">
    <property type="pathway name" value="Antigen processing: Ubiquitination &amp; Proteasome degradation"/>
</dbReference>
<dbReference type="Reactome" id="R-HSA-9907900">
    <property type="pathway name" value="Proteasome assembly"/>
</dbReference>
<dbReference type="SignaLink" id="P28070"/>
<dbReference type="SIGNOR" id="P28070"/>
<dbReference type="BioGRID-ORCS" id="5692">
    <property type="hits" value="844 hits in 1167 CRISPR screens"/>
</dbReference>
<dbReference type="ChiTaRS" id="PSMB4">
    <property type="organism name" value="human"/>
</dbReference>
<dbReference type="EvolutionaryTrace" id="P28070"/>
<dbReference type="GeneWiki" id="PSMB4"/>
<dbReference type="GenomeRNAi" id="5692"/>
<dbReference type="Pharos" id="P28070">
    <property type="development level" value="Tbio"/>
</dbReference>
<dbReference type="PRO" id="PR:P28070"/>
<dbReference type="Proteomes" id="UP000005640">
    <property type="component" value="Chromosome 1"/>
</dbReference>
<dbReference type="RNAct" id="P28070">
    <property type="molecule type" value="protein"/>
</dbReference>
<dbReference type="Bgee" id="ENSG00000159377">
    <property type="expression patterns" value="Expressed in endometrium epithelium and 207 other cell types or tissues"/>
</dbReference>
<dbReference type="ExpressionAtlas" id="P28070">
    <property type="expression patterns" value="baseline and differential"/>
</dbReference>
<dbReference type="GO" id="GO:0036064">
    <property type="term" value="C:ciliary basal body"/>
    <property type="evidence" value="ECO:0000314"/>
    <property type="project" value="GO_Central"/>
</dbReference>
<dbReference type="GO" id="GO:0005737">
    <property type="term" value="C:cytoplasm"/>
    <property type="evidence" value="ECO:0000314"/>
    <property type="project" value="UniProtKB"/>
</dbReference>
<dbReference type="GO" id="GO:0005829">
    <property type="term" value="C:cytosol"/>
    <property type="evidence" value="ECO:0000318"/>
    <property type="project" value="GO_Central"/>
</dbReference>
<dbReference type="GO" id="GO:0070062">
    <property type="term" value="C:extracellular exosome"/>
    <property type="evidence" value="ECO:0007005"/>
    <property type="project" value="UniProtKB"/>
</dbReference>
<dbReference type="GO" id="GO:0005739">
    <property type="term" value="C:mitochondrion"/>
    <property type="evidence" value="ECO:0000314"/>
    <property type="project" value="HPA"/>
</dbReference>
<dbReference type="GO" id="GO:0005654">
    <property type="term" value="C:nucleoplasm"/>
    <property type="evidence" value="ECO:0000314"/>
    <property type="project" value="HPA"/>
</dbReference>
<dbReference type="GO" id="GO:0005634">
    <property type="term" value="C:nucleus"/>
    <property type="evidence" value="ECO:0000314"/>
    <property type="project" value="UniProtKB"/>
</dbReference>
<dbReference type="GO" id="GO:0000502">
    <property type="term" value="C:proteasome complex"/>
    <property type="evidence" value="ECO:0000314"/>
    <property type="project" value="UniProtKB"/>
</dbReference>
<dbReference type="GO" id="GO:0005839">
    <property type="term" value="C:proteasome core complex"/>
    <property type="evidence" value="ECO:0000314"/>
    <property type="project" value="UniProtKB"/>
</dbReference>
<dbReference type="GO" id="GO:0019774">
    <property type="term" value="C:proteasome core complex, beta-subunit complex"/>
    <property type="evidence" value="ECO:0000250"/>
    <property type="project" value="UniProtKB"/>
</dbReference>
<dbReference type="GO" id="GO:0001530">
    <property type="term" value="F:lipopolysaccharide binding"/>
    <property type="evidence" value="ECO:0007669"/>
    <property type="project" value="Ensembl"/>
</dbReference>
<dbReference type="GO" id="GO:0002862">
    <property type="term" value="P:negative regulation of inflammatory response to antigenic stimulus"/>
    <property type="evidence" value="ECO:0007669"/>
    <property type="project" value="Ensembl"/>
</dbReference>
<dbReference type="GO" id="GO:0043161">
    <property type="term" value="P:proteasome-mediated ubiquitin-dependent protein catabolic process"/>
    <property type="evidence" value="ECO:0000315"/>
    <property type="project" value="UniProtKB"/>
</dbReference>
<dbReference type="CDD" id="cd03760">
    <property type="entry name" value="proteasome_beta_type_4"/>
    <property type="match status" value="1"/>
</dbReference>
<dbReference type="FunFam" id="3.60.20.10:FF:000014">
    <property type="entry name" value="Proteasome subunit beta type-7"/>
    <property type="match status" value="1"/>
</dbReference>
<dbReference type="Gene3D" id="3.60.20.10">
    <property type="entry name" value="Glutamine Phosphoribosylpyrophosphate, subunit 1, domain 1"/>
    <property type="match status" value="1"/>
</dbReference>
<dbReference type="InterPro" id="IPR029055">
    <property type="entry name" value="Ntn_hydrolases_N"/>
</dbReference>
<dbReference type="InterPro" id="IPR016295">
    <property type="entry name" value="Proteasome_beta4"/>
</dbReference>
<dbReference type="InterPro" id="IPR016050">
    <property type="entry name" value="Proteasome_bsu_CS"/>
</dbReference>
<dbReference type="InterPro" id="IPR001353">
    <property type="entry name" value="Proteasome_sua/b"/>
</dbReference>
<dbReference type="InterPro" id="IPR023333">
    <property type="entry name" value="Proteasome_suB-type"/>
</dbReference>
<dbReference type="PANTHER" id="PTHR32194">
    <property type="entry name" value="METALLOPROTEASE TLDD"/>
    <property type="match status" value="1"/>
</dbReference>
<dbReference type="PANTHER" id="PTHR32194:SF6">
    <property type="entry name" value="PROTEASOME SUBUNIT BETA"/>
    <property type="match status" value="1"/>
</dbReference>
<dbReference type="Pfam" id="PF00227">
    <property type="entry name" value="Proteasome"/>
    <property type="match status" value="1"/>
</dbReference>
<dbReference type="PIRSF" id="PIRSF001213">
    <property type="entry name" value="Psome_endopept_beta"/>
    <property type="match status" value="1"/>
</dbReference>
<dbReference type="SUPFAM" id="SSF56235">
    <property type="entry name" value="N-terminal nucleophile aminohydrolases (Ntn hydrolases)"/>
    <property type="match status" value="1"/>
</dbReference>
<dbReference type="PROSITE" id="PS00854">
    <property type="entry name" value="PROTEASOME_BETA_1"/>
    <property type="match status" value="1"/>
</dbReference>
<dbReference type="PROSITE" id="PS51476">
    <property type="entry name" value="PROTEASOME_BETA_2"/>
    <property type="match status" value="1"/>
</dbReference>